<proteinExistence type="evidence at protein level"/>
<feature type="initiator methionine" description="Removed" evidence="17 22">
    <location>
        <position position="1"/>
    </location>
</feature>
<feature type="chain" id="PRO_0000124623" description="Aldo-keto reductase family 1 member B1">
    <location>
        <begin position="2"/>
        <end position="316"/>
    </location>
</feature>
<feature type="active site" description="Proton donor" evidence="6">
    <location>
        <position position="49"/>
    </location>
</feature>
<feature type="binding site" evidence="2">
    <location>
        <begin position="10"/>
        <end position="19"/>
    </location>
    <ligand>
        <name>NADP(+)</name>
        <dbReference type="ChEBI" id="CHEBI:58349"/>
    </ligand>
</feature>
<feature type="binding site">
    <location>
        <position position="111"/>
    </location>
    <ligand>
        <name>substrate</name>
    </ligand>
</feature>
<feature type="binding site" evidence="5 6 7 8 10 11">
    <location>
        <begin position="211"/>
        <end position="273"/>
    </location>
    <ligand>
        <name>NADP(+)</name>
        <dbReference type="ChEBI" id="CHEBI:58349"/>
    </ligand>
</feature>
<feature type="site" description="Lowers pKa of active site Tyr">
    <location>
        <position position="78"/>
    </location>
</feature>
<feature type="modified residue" description="N-acetylalanine" evidence="17 22">
    <location>
        <position position="2"/>
    </location>
</feature>
<feature type="modified residue" description="Phosphoserine" evidence="1">
    <location>
        <position position="3"/>
    </location>
</feature>
<feature type="modified residue" description="N6-acetyllysine" evidence="23">
    <location>
        <position position="95"/>
    </location>
</feature>
<feature type="modified residue" description="N6-acetyllysine" evidence="23">
    <location>
        <position position="222"/>
    </location>
</feature>
<feature type="modified residue" description="N6-acetyllysine" evidence="23">
    <location>
        <position position="263"/>
    </location>
</feature>
<feature type="sequence variant" id="VAR_014743" description="In dbSNP:rs5054.">
    <original>I</original>
    <variation>F</variation>
    <location>
        <position position="15"/>
    </location>
</feature>
<feature type="sequence variant" id="VAR_014744" description="In dbSNP:rs5056.">
    <original>H</original>
    <variation>L</variation>
    <location>
        <position position="42"/>
    </location>
</feature>
<feature type="sequence variant" id="VAR_014745" description="In dbSNP:rs5057.">
    <original>L</original>
    <variation>V</variation>
    <location>
        <position position="73"/>
    </location>
</feature>
<feature type="sequence variant" id="VAR_048213" description="In dbSNP:rs2229542.">
    <original>K</original>
    <variation>E</variation>
    <location>
        <position position="90"/>
    </location>
</feature>
<feature type="sequence variant" id="VAR_014746" description="In dbSNP:rs5061.">
    <original>G</original>
    <variation>S</variation>
    <location>
        <position position="204"/>
    </location>
</feature>
<feature type="sequence variant" id="VAR_014747" description="In dbSNP:rs5062.">
    <original>T</original>
    <variation>I</variation>
    <location>
        <position position="288"/>
    </location>
</feature>
<feature type="mutagenesis site" description="Reduced glyceraldehyde oxidoreductase activity." evidence="16">
    <original>D</original>
    <variation>N</variation>
    <location>
        <position position="44"/>
    </location>
</feature>
<feature type="mutagenesis site" description="Complete loss of glyceraldehyde oxidoreductase activity." evidence="16">
    <original>Y</original>
    <variation>F</variation>
    <location>
        <position position="49"/>
    </location>
</feature>
<feature type="mutagenesis site" description="Reduced glyceraldehyde oxidoreductase activity." evidence="16">
    <original>K</original>
    <variation>M</variation>
    <location>
        <position position="78"/>
    </location>
</feature>
<feature type="mutagenesis site" description="Reduced glyceraldehyde oxidoreductase activity." evidence="16">
    <original>H</original>
    <variation>N</variation>
    <location>
        <position position="111"/>
    </location>
</feature>
<feature type="sequence conflict" description="In Ref. 2; AAA51714." evidence="21" ref="2">
    <original>L</original>
    <variation>I</variation>
    <location>
        <position position="5"/>
    </location>
</feature>
<feature type="sequence conflict" description="In Ref. 10; CAG47000." evidence="21" ref="10">
    <original>T</original>
    <variation>I</variation>
    <location>
        <position position="114"/>
    </location>
</feature>
<feature type="sequence conflict" description="In Ref. 10; CAG29347." evidence="21" ref="10">
    <original>K</original>
    <variation>R</variation>
    <location>
        <position position="117"/>
    </location>
</feature>
<feature type="sequence conflict" description="In Ref. 14; AAH05387." evidence="21" ref="14">
    <original>W</original>
    <variation>R</variation>
    <location>
        <position position="142"/>
    </location>
</feature>
<feature type="sequence conflict" description="In Ref. 10; CAG29347." evidence="21" ref="10">
    <original>N</original>
    <variation>S</variation>
    <location>
        <position position="172"/>
    </location>
</feature>
<feature type="sequence conflict" description="In Ref. 16; AA sequence." evidence="21" ref="16">
    <original>IAE</original>
    <variation>EAA</variation>
    <location>
        <begin position="270"/>
        <end position="272"/>
    </location>
</feature>
<feature type="sequence conflict" description="In Ref. 18; AA sequence." evidence="21" ref="18">
    <original>H</original>
    <variation>M</variation>
    <location>
        <position position="307"/>
    </location>
</feature>
<feature type="strand" evidence="25">
    <location>
        <begin position="3"/>
        <end position="6"/>
    </location>
</feature>
<feature type="strand" evidence="25">
    <location>
        <begin position="12"/>
        <end position="16"/>
    </location>
</feature>
<feature type="helix" evidence="25">
    <location>
        <begin position="25"/>
        <end position="38"/>
    </location>
</feature>
<feature type="strand" evidence="25">
    <location>
        <begin position="42"/>
        <end position="44"/>
    </location>
</feature>
<feature type="helix" evidence="25">
    <location>
        <begin position="47"/>
        <end position="49"/>
    </location>
</feature>
<feature type="helix" evidence="25">
    <location>
        <begin position="52"/>
        <end position="64"/>
    </location>
</feature>
<feature type="helix" evidence="25">
    <location>
        <begin position="70"/>
        <end position="72"/>
    </location>
</feature>
<feature type="strand" evidence="25">
    <location>
        <begin position="74"/>
        <end position="79"/>
    </location>
</feature>
<feature type="helix" evidence="25">
    <location>
        <begin position="81"/>
        <end position="83"/>
    </location>
</feature>
<feature type="turn" evidence="25">
    <location>
        <begin position="86"/>
        <end position="88"/>
    </location>
</feature>
<feature type="helix" evidence="25">
    <location>
        <begin position="89"/>
        <end position="100"/>
    </location>
</feature>
<feature type="strand" evidence="25">
    <location>
        <begin position="105"/>
        <end position="113"/>
    </location>
</feature>
<feature type="strand" evidence="28">
    <location>
        <begin position="118"/>
        <end position="120"/>
    </location>
</feature>
<feature type="strand" evidence="29">
    <location>
        <begin position="127"/>
        <end position="129"/>
    </location>
</feature>
<feature type="helix" evidence="25">
    <location>
        <begin position="138"/>
        <end position="150"/>
    </location>
</feature>
<feature type="strand" evidence="25">
    <location>
        <begin position="153"/>
        <end position="155"/>
    </location>
</feature>
<feature type="strand" evidence="25">
    <location>
        <begin position="157"/>
        <end position="161"/>
    </location>
</feature>
<feature type="helix" evidence="25">
    <location>
        <begin position="164"/>
        <end position="171"/>
    </location>
</feature>
<feature type="strand" evidence="25">
    <location>
        <begin position="181"/>
        <end position="186"/>
    </location>
</feature>
<feature type="helix" evidence="25">
    <location>
        <begin position="194"/>
        <end position="202"/>
    </location>
</feature>
<feature type="strand" evidence="25">
    <location>
        <begin position="206"/>
        <end position="211"/>
    </location>
</feature>
<feature type="strand" evidence="27">
    <location>
        <begin position="223"/>
        <end position="225"/>
    </location>
</feature>
<feature type="turn" evidence="25">
    <location>
        <begin position="228"/>
        <end position="230"/>
    </location>
</feature>
<feature type="helix" evidence="25">
    <location>
        <begin position="232"/>
        <end position="241"/>
    </location>
</feature>
<feature type="helix" evidence="25">
    <location>
        <begin position="245"/>
        <end position="255"/>
    </location>
</feature>
<feature type="strand" evidence="26">
    <location>
        <begin position="259"/>
        <end position="261"/>
    </location>
</feature>
<feature type="helix" evidence="25">
    <location>
        <begin position="267"/>
        <end position="274"/>
    </location>
</feature>
<feature type="helix" evidence="25">
    <location>
        <begin position="283"/>
        <end position="290"/>
    </location>
</feature>
<feature type="helix" evidence="25">
    <location>
        <begin position="302"/>
        <end position="304"/>
    </location>
</feature>
<feature type="strand" evidence="24">
    <location>
        <begin position="307"/>
        <end position="309"/>
    </location>
</feature>
<feature type="strand" evidence="29">
    <location>
        <begin position="311"/>
        <end position="314"/>
    </location>
</feature>
<dbReference type="EC" id="1.1.1.21" evidence="16"/>
<dbReference type="EC" id="1.1.1.300" evidence="4"/>
<dbReference type="EC" id="1.1.1.372" evidence="3 4 16"/>
<dbReference type="EC" id="1.1.1.54" evidence="3 15"/>
<dbReference type="EMBL" id="J04795">
    <property type="protein sequence ID" value="AAA51713.1"/>
    <property type="molecule type" value="mRNA"/>
</dbReference>
<dbReference type="EMBL" id="J05017">
    <property type="protein sequence ID" value="AAA51714.1"/>
    <property type="molecule type" value="mRNA"/>
</dbReference>
<dbReference type="EMBL" id="X15414">
    <property type="protein sequence ID" value="CAA33460.1"/>
    <property type="molecule type" value="mRNA"/>
</dbReference>
<dbReference type="EMBL" id="M34720">
    <property type="protein sequence ID" value="AAA35560.1"/>
    <property type="molecule type" value="mRNA"/>
</dbReference>
<dbReference type="EMBL" id="M34721">
    <property type="protein sequence ID" value="AAA35561.1"/>
    <property type="molecule type" value="Genomic_DNA"/>
</dbReference>
<dbReference type="EMBL" id="J05474">
    <property type="protein sequence ID" value="AAA51715.1"/>
    <property type="molecule type" value="mRNA"/>
</dbReference>
<dbReference type="EMBL" id="M59783">
    <property type="protein sequence ID" value="AAA51712.1"/>
    <property type="molecule type" value="Genomic_DNA"/>
</dbReference>
<dbReference type="EMBL" id="M59856">
    <property type="protein sequence ID" value="AAA51712.1"/>
    <property type="status" value="JOINED"/>
    <property type="molecule type" value="Genomic_DNA"/>
</dbReference>
<dbReference type="EMBL" id="AF032455">
    <property type="protein sequence ID" value="AAB88851.1"/>
    <property type="molecule type" value="Genomic_DNA"/>
</dbReference>
<dbReference type="EMBL" id="AF328729">
    <property type="protein sequence ID" value="AAN09721.1"/>
    <property type="molecule type" value="mRNA"/>
</dbReference>
<dbReference type="EMBL" id="AK313439">
    <property type="protein sequence ID" value="BAG36230.1"/>
    <property type="molecule type" value="mRNA"/>
</dbReference>
<dbReference type="EMBL" id="CR450351">
    <property type="protein sequence ID" value="CAG29347.1"/>
    <property type="molecule type" value="mRNA"/>
</dbReference>
<dbReference type="EMBL" id="CR542203">
    <property type="protein sequence ID" value="CAG47000.1"/>
    <property type="molecule type" value="mRNA"/>
</dbReference>
<dbReference type="EMBL" id="BT019859">
    <property type="protein sequence ID" value="AAV38662.1"/>
    <property type="molecule type" value="mRNA"/>
</dbReference>
<dbReference type="EMBL" id="CH236950">
    <property type="protein sequence ID" value="EAL24070.1"/>
    <property type="molecule type" value="Genomic_DNA"/>
</dbReference>
<dbReference type="EMBL" id="CH471070">
    <property type="protein sequence ID" value="EAW83814.1"/>
    <property type="molecule type" value="Genomic_DNA"/>
</dbReference>
<dbReference type="EMBL" id="BC000260">
    <property type="protein sequence ID" value="AAH00260.1"/>
    <property type="molecule type" value="mRNA"/>
</dbReference>
<dbReference type="EMBL" id="BC005387">
    <property type="protein sequence ID" value="AAH05387.1"/>
    <property type="molecule type" value="mRNA"/>
</dbReference>
<dbReference type="EMBL" id="BC010391">
    <property type="protein sequence ID" value="AAH10391.1"/>
    <property type="molecule type" value="mRNA"/>
</dbReference>
<dbReference type="CCDS" id="CCDS5831.1"/>
<dbReference type="PIR" id="A39763">
    <property type="entry name" value="A39763"/>
</dbReference>
<dbReference type="RefSeq" id="NP_001619.1">
    <property type="nucleotide sequence ID" value="NM_001628.4"/>
</dbReference>
<dbReference type="PDB" id="1ABN">
    <property type="method" value="X-ray"/>
    <property type="resolution" value="2.40 A"/>
    <property type="chains" value="A=2-316"/>
</dbReference>
<dbReference type="PDB" id="1ADS">
    <property type="method" value="X-ray"/>
    <property type="resolution" value="1.65 A"/>
    <property type="chains" value="A=2-316"/>
</dbReference>
<dbReference type="PDB" id="1AZ1">
    <property type="method" value="X-ray"/>
    <property type="resolution" value="1.80 A"/>
    <property type="chains" value="A=2-316"/>
</dbReference>
<dbReference type="PDB" id="1AZ2">
    <property type="method" value="X-ray"/>
    <property type="resolution" value="2.90 A"/>
    <property type="chains" value="A=2-316"/>
</dbReference>
<dbReference type="PDB" id="1EF3">
    <property type="method" value="X-ray"/>
    <property type="resolution" value="2.80 A"/>
    <property type="chains" value="A/B=2-316"/>
</dbReference>
<dbReference type="PDB" id="1EL3">
    <property type="method" value="X-ray"/>
    <property type="resolution" value="1.70 A"/>
    <property type="chains" value="A=1-316"/>
</dbReference>
<dbReference type="PDB" id="1IEI">
    <property type="method" value="X-ray"/>
    <property type="resolution" value="2.50 A"/>
    <property type="chains" value="A=1-316"/>
</dbReference>
<dbReference type="PDB" id="1MAR">
    <property type="method" value="X-ray"/>
    <property type="resolution" value="1.80 A"/>
    <property type="chains" value="A=2-316"/>
</dbReference>
<dbReference type="PDB" id="1PWL">
    <property type="method" value="X-ray"/>
    <property type="resolution" value="1.10 A"/>
    <property type="chains" value="A=1-316"/>
</dbReference>
<dbReference type="PDB" id="1PWM">
    <property type="method" value="X-ray"/>
    <property type="resolution" value="0.92 A"/>
    <property type="chains" value="A=1-316"/>
</dbReference>
<dbReference type="PDB" id="1T40">
    <property type="method" value="X-ray"/>
    <property type="resolution" value="1.80 A"/>
    <property type="chains" value="A=1-316"/>
</dbReference>
<dbReference type="PDB" id="1T41">
    <property type="method" value="X-ray"/>
    <property type="resolution" value="1.05 A"/>
    <property type="chains" value="A=1-316"/>
</dbReference>
<dbReference type="PDB" id="1US0">
    <property type="method" value="X-ray"/>
    <property type="resolution" value="0.66 A"/>
    <property type="chains" value="A=1-316"/>
</dbReference>
<dbReference type="PDB" id="1X96">
    <property type="method" value="X-ray"/>
    <property type="resolution" value="1.40 A"/>
    <property type="chains" value="A=1-316"/>
</dbReference>
<dbReference type="PDB" id="1X97">
    <property type="method" value="X-ray"/>
    <property type="resolution" value="1.40 A"/>
    <property type="chains" value="A=1-316"/>
</dbReference>
<dbReference type="PDB" id="1X98">
    <property type="method" value="X-ray"/>
    <property type="resolution" value="1.30 A"/>
    <property type="chains" value="A=1-316"/>
</dbReference>
<dbReference type="PDB" id="1XGD">
    <property type="method" value="X-ray"/>
    <property type="resolution" value="2.10 A"/>
    <property type="chains" value="A=2-316"/>
</dbReference>
<dbReference type="PDB" id="1Z3N">
    <property type="method" value="X-ray"/>
    <property type="resolution" value="1.04 A"/>
    <property type="chains" value="A=1-316"/>
</dbReference>
<dbReference type="PDB" id="1Z89">
    <property type="method" value="X-ray"/>
    <property type="resolution" value="1.43 A"/>
    <property type="chains" value="A=1-316"/>
</dbReference>
<dbReference type="PDB" id="1Z8A">
    <property type="method" value="X-ray"/>
    <property type="resolution" value="0.95 A"/>
    <property type="chains" value="A=1-316"/>
</dbReference>
<dbReference type="PDB" id="2ACQ">
    <property type="method" value="X-ray"/>
    <property type="resolution" value="1.76 A"/>
    <property type="chains" value="A=2-316"/>
</dbReference>
<dbReference type="PDB" id="2ACR">
    <property type="method" value="X-ray"/>
    <property type="resolution" value="1.76 A"/>
    <property type="chains" value="A=2-316"/>
</dbReference>
<dbReference type="PDB" id="2ACS">
    <property type="method" value="X-ray"/>
    <property type="resolution" value="1.76 A"/>
    <property type="chains" value="A=2-316"/>
</dbReference>
<dbReference type="PDB" id="2ACU">
    <property type="method" value="X-ray"/>
    <property type="resolution" value="1.76 A"/>
    <property type="chains" value="A=2-316"/>
</dbReference>
<dbReference type="PDB" id="2AGT">
    <property type="method" value="X-ray"/>
    <property type="resolution" value="1.00 A"/>
    <property type="chains" value="A=1-316"/>
</dbReference>
<dbReference type="PDB" id="2DUX">
    <property type="method" value="X-ray"/>
    <property type="resolution" value="1.60 A"/>
    <property type="chains" value="A=1-316"/>
</dbReference>
<dbReference type="PDB" id="2DUZ">
    <property type="method" value="X-ray"/>
    <property type="resolution" value="1.60 A"/>
    <property type="chains" value="A=1-316"/>
</dbReference>
<dbReference type="PDB" id="2DV0">
    <property type="method" value="X-ray"/>
    <property type="resolution" value="1.62 A"/>
    <property type="chains" value="A=1-316"/>
</dbReference>
<dbReference type="PDB" id="2F2K">
    <property type="method" value="X-ray"/>
    <property type="resolution" value="1.94 A"/>
    <property type="chains" value="A=1-316"/>
</dbReference>
<dbReference type="PDB" id="2FZ8">
    <property type="method" value="X-ray"/>
    <property type="resolution" value="1.48 A"/>
    <property type="chains" value="A=1-316"/>
</dbReference>
<dbReference type="PDB" id="2FZ9">
    <property type="method" value="X-ray"/>
    <property type="resolution" value="1.60 A"/>
    <property type="chains" value="A=1-316"/>
</dbReference>
<dbReference type="PDB" id="2FZB">
    <property type="method" value="X-ray"/>
    <property type="resolution" value="1.50 A"/>
    <property type="chains" value="A=6-316"/>
</dbReference>
<dbReference type="PDB" id="2FZD">
    <property type="method" value="X-ray"/>
    <property type="resolution" value="1.08 A"/>
    <property type="chains" value="A=6-316"/>
</dbReference>
<dbReference type="PDB" id="2HV5">
    <property type="method" value="X-ray"/>
    <property type="resolution" value="1.59 A"/>
    <property type="chains" value="A=1-316"/>
</dbReference>
<dbReference type="PDB" id="2HVN">
    <property type="method" value="X-ray"/>
    <property type="resolution" value="1.58 A"/>
    <property type="chains" value="A=1-316"/>
</dbReference>
<dbReference type="PDB" id="2HVO">
    <property type="method" value="X-ray"/>
    <property type="resolution" value="1.65 A"/>
    <property type="chains" value="A=1-316"/>
</dbReference>
<dbReference type="PDB" id="2I16">
    <property type="method" value="X-ray"/>
    <property type="resolution" value="0.81 A"/>
    <property type="chains" value="A=1-316"/>
</dbReference>
<dbReference type="PDB" id="2I17">
    <property type="method" value="X-ray"/>
    <property type="resolution" value="0.81 A"/>
    <property type="chains" value="A=1-316"/>
</dbReference>
<dbReference type="PDB" id="2IKG">
    <property type="method" value="X-ray"/>
    <property type="resolution" value="1.43 A"/>
    <property type="chains" value="A=1-316"/>
</dbReference>
<dbReference type="PDB" id="2IKH">
    <property type="method" value="X-ray"/>
    <property type="resolution" value="1.55 A"/>
    <property type="chains" value="A=1-316"/>
</dbReference>
<dbReference type="PDB" id="2IKI">
    <property type="method" value="X-ray"/>
    <property type="resolution" value="1.47 A"/>
    <property type="chains" value="A=1-316"/>
</dbReference>
<dbReference type="PDB" id="2IKJ">
    <property type="method" value="X-ray"/>
    <property type="resolution" value="1.55 A"/>
    <property type="chains" value="A=1-316"/>
</dbReference>
<dbReference type="PDB" id="2INE">
    <property type="method" value="X-ray"/>
    <property type="resolution" value="1.90 A"/>
    <property type="chains" value="A=2-316"/>
</dbReference>
<dbReference type="PDB" id="2INZ">
    <property type="method" value="X-ray"/>
    <property type="resolution" value="1.95 A"/>
    <property type="chains" value="A=2-316"/>
</dbReference>
<dbReference type="PDB" id="2IPW">
    <property type="method" value="X-ray"/>
    <property type="resolution" value="2.00 A"/>
    <property type="chains" value="A=2-316"/>
</dbReference>
<dbReference type="PDB" id="2IQ0">
    <property type="method" value="X-ray"/>
    <property type="resolution" value="1.95 A"/>
    <property type="chains" value="A=2-316"/>
</dbReference>
<dbReference type="PDB" id="2IQD">
    <property type="method" value="X-ray"/>
    <property type="resolution" value="2.00 A"/>
    <property type="chains" value="A=2-316"/>
</dbReference>
<dbReference type="PDB" id="2IS7">
    <property type="method" value="X-ray"/>
    <property type="resolution" value="1.70 A"/>
    <property type="chains" value="A=2-316"/>
</dbReference>
<dbReference type="PDB" id="2ISF">
    <property type="method" value="X-ray"/>
    <property type="resolution" value="2.00 A"/>
    <property type="chains" value="A=2-316"/>
</dbReference>
<dbReference type="PDB" id="2J8T">
    <property type="method" value="X-ray"/>
    <property type="resolution" value="0.82 A"/>
    <property type="chains" value="A=6-316"/>
</dbReference>
<dbReference type="PDB" id="2NVC">
    <property type="method" value="X-ray"/>
    <property type="resolution" value="1.65 A"/>
    <property type="chains" value="A=1-316"/>
</dbReference>
<dbReference type="PDB" id="2NVD">
    <property type="method" value="X-ray"/>
    <property type="resolution" value="1.55 A"/>
    <property type="chains" value="A=1-316"/>
</dbReference>
<dbReference type="PDB" id="2PD5">
    <property type="method" value="X-ray"/>
    <property type="resolution" value="1.60 A"/>
    <property type="chains" value="A=1-316"/>
</dbReference>
<dbReference type="PDB" id="2PD9">
    <property type="method" value="X-ray"/>
    <property type="resolution" value="1.55 A"/>
    <property type="chains" value="A=1-316"/>
</dbReference>
<dbReference type="PDB" id="2PDB">
    <property type="method" value="X-ray"/>
    <property type="resolution" value="1.60 A"/>
    <property type="chains" value="A=1-316"/>
</dbReference>
<dbReference type="PDB" id="2PDC">
    <property type="method" value="X-ray"/>
    <property type="resolution" value="1.65 A"/>
    <property type="chains" value="A=1-316"/>
</dbReference>
<dbReference type="PDB" id="2PDF">
    <property type="method" value="X-ray"/>
    <property type="resolution" value="1.56 A"/>
    <property type="chains" value="A=1-316"/>
</dbReference>
<dbReference type="PDB" id="2PDG">
    <property type="method" value="X-ray"/>
    <property type="resolution" value="1.42 A"/>
    <property type="chains" value="A=1-316"/>
</dbReference>
<dbReference type="PDB" id="2PDH">
    <property type="method" value="X-ray"/>
    <property type="resolution" value="1.45 A"/>
    <property type="chains" value="A=1-316"/>
</dbReference>
<dbReference type="PDB" id="2PDI">
    <property type="method" value="X-ray"/>
    <property type="resolution" value="1.55 A"/>
    <property type="chains" value="A=1-316"/>
</dbReference>
<dbReference type="PDB" id="2PDJ">
    <property type="method" value="X-ray"/>
    <property type="resolution" value="1.57 A"/>
    <property type="chains" value="A=1-316"/>
</dbReference>
<dbReference type="PDB" id="2PDK">
    <property type="method" value="X-ray"/>
    <property type="resolution" value="1.55 A"/>
    <property type="chains" value="A=1-316"/>
</dbReference>
<dbReference type="PDB" id="2PDL">
    <property type="method" value="X-ray"/>
    <property type="resolution" value="1.47 A"/>
    <property type="chains" value="A=1-316"/>
</dbReference>
<dbReference type="PDB" id="2PDM">
    <property type="method" value="X-ray"/>
    <property type="resolution" value="1.75 A"/>
    <property type="chains" value="A=1-316"/>
</dbReference>
<dbReference type="PDB" id="2PDN">
    <property type="method" value="X-ray"/>
    <property type="resolution" value="1.70 A"/>
    <property type="chains" value="A=1-316"/>
</dbReference>
<dbReference type="PDB" id="2PDP">
    <property type="method" value="X-ray"/>
    <property type="resolution" value="1.65 A"/>
    <property type="chains" value="A=1-316"/>
</dbReference>
<dbReference type="PDB" id="2PDQ">
    <property type="method" value="X-ray"/>
    <property type="resolution" value="1.73 A"/>
    <property type="chains" value="A=1-316"/>
</dbReference>
<dbReference type="PDB" id="2PDU">
    <property type="method" value="X-ray"/>
    <property type="resolution" value="1.55 A"/>
    <property type="chains" value="A=1-316"/>
</dbReference>
<dbReference type="PDB" id="2PDW">
    <property type="method" value="X-ray"/>
    <property type="resolution" value="1.55 A"/>
    <property type="chains" value="A=1-316"/>
</dbReference>
<dbReference type="PDB" id="2PDX">
    <property type="method" value="X-ray"/>
    <property type="resolution" value="1.65 A"/>
    <property type="chains" value="A=1-316"/>
</dbReference>
<dbReference type="PDB" id="2PDY">
    <property type="method" value="X-ray"/>
    <property type="resolution" value="1.65 A"/>
    <property type="chains" value="A=1-316"/>
</dbReference>
<dbReference type="PDB" id="2PEV">
    <property type="method" value="X-ray"/>
    <property type="resolution" value="0.90 A"/>
    <property type="chains" value="A=1-316"/>
</dbReference>
<dbReference type="PDB" id="2PF8">
    <property type="method" value="X-ray"/>
    <property type="resolution" value="0.85 A"/>
    <property type="chains" value="A=1-316"/>
</dbReference>
<dbReference type="PDB" id="2PFH">
    <property type="method" value="X-ray"/>
    <property type="resolution" value="0.85 A"/>
    <property type="chains" value="A=1-316"/>
</dbReference>
<dbReference type="PDB" id="2PZN">
    <property type="method" value="X-ray"/>
    <property type="resolution" value="1.00 A"/>
    <property type="chains" value="A=1-316"/>
</dbReference>
<dbReference type="PDB" id="2QXW">
    <property type="method" value="X-ray"/>
    <property type="resolution" value="0.80 A"/>
    <property type="chains" value="A=1-316"/>
</dbReference>
<dbReference type="PDB" id="2R24">
    <property type="method" value="X-ray"/>
    <property type="resolution" value="1.75 A"/>
    <property type="chains" value="A=1-316"/>
</dbReference>
<dbReference type="PDB" id="3BCJ">
    <property type="method" value="X-ray"/>
    <property type="resolution" value="0.78 A"/>
    <property type="chains" value="A=1-316"/>
</dbReference>
<dbReference type="PDB" id="3DN5">
    <property type="method" value="X-ray"/>
    <property type="resolution" value="1.45 A"/>
    <property type="chains" value="A=1-316"/>
</dbReference>
<dbReference type="PDB" id="3G5E">
    <property type="method" value="X-ray"/>
    <property type="resolution" value="1.80 A"/>
    <property type="chains" value="A=1-316"/>
</dbReference>
<dbReference type="PDB" id="3GHR">
    <property type="method" value="X-ray"/>
    <property type="resolution" value="1.00 A"/>
    <property type="chains" value="A=1-316"/>
</dbReference>
<dbReference type="PDB" id="3GHS">
    <property type="method" value="X-ray"/>
    <property type="resolution" value="1.00 A"/>
    <property type="chains" value="A=1-316"/>
</dbReference>
<dbReference type="PDB" id="3GHT">
    <property type="method" value="X-ray"/>
    <property type="resolution" value="1.10 A"/>
    <property type="chains" value="A=1-316"/>
</dbReference>
<dbReference type="PDB" id="3GHU">
    <property type="method" value="X-ray"/>
    <property type="resolution" value="1.20 A"/>
    <property type="chains" value="A=1-316"/>
</dbReference>
<dbReference type="PDB" id="3LBO">
    <property type="method" value="X-ray"/>
    <property type="resolution" value="1.10 A"/>
    <property type="chains" value="A=1-316"/>
</dbReference>
<dbReference type="PDB" id="3LD5">
    <property type="method" value="X-ray"/>
    <property type="resolution" value="1.27 A"/>
    <property type="chains" value="A=1-316"/>
</dbReference>
<dbReference type="PDB" id="3LEN">
    <property type="method" value="X-ray"/>
    <property type="resolution" value="1.21 A"/>
    <property type="chains" value="A=1-316"/>
</dbReference>
<dbReference type="PDB" id="3LEP">
    <property type="method" value="X-ray"/>
    <property type="resolution" value="0.99 A"/>
    <property type="chains" value="A=1-316"/>
</dbReference>
<dbReference type="PDB" id="3LQG">
    <property type="method" value="X-ray"/>
    <property type="resolution" value="1.35 A"/>
    <property type="chains" value="A=1-316"/>
</dbReference>
<dbReference type="PDB" id="3LQL">
    <property type="method" value="X-ray"/>
    <property type="resolution" value="1.13 A"/>
    <property type="chains" value="A=1-316"/>
</dbReference>
<dbReference type="PDB" id="3LZ3">
    <property type="method" value="X-ray"/>
    <property type="resolution" value="1.03 A"/>
    <property type="chains" value="A=1-316"/>
</dbReference>
<dbReference type="PDB" id="3LZ5">
    <property type="method" value="X-ray"/>
    <property type="resolution" value="0.95 A"/>
    <property type="chains" value="A=1-316"/>
</dbReference>
<dbReference type="PDB" id="3M0I">
    <property type="method" value="X-ray"/>
    <property type="resolution" value="1.07 A"/>
    <property type="chains" value="A=1-316"/>
</dbReference>
<dbReference type="PDB" id="3M4H">
    <property type="method" value="X-ray"/>
    <property type="resolution" value="0.94 A"/>
    <property type="chains" value="A=1-316"/>
</dbReference>
<dbReference type="PDB" id="3M64">
    <property type="method" value="X-ray"/>
    <property type="resolution" value="1.30 A"/>
    <property type="chains" value="A=1-316"/>
</dbReference>
<dbReference type="PDB" id="3MB9">
    <property type="method" value="X-ray"/>
    <property type="resolution" value="1.65 A"/>
    <property type="chains" value="A=1-316"/>
</dbReference>
<dbReference type="PDB" id="3MC5">
    <property type="method" value="X-ray"/>
    <property type="resolution" value="1.14 A"/>
    <property type="chains" value="A=1-316"/>
</dbReference>
<dbReference type="PDB" id="3ONB">
    <property type="method" value="X-ray"/>
    <property type="resolution" value="1.45 A"/>
    <property type="chains" value="A=2-316"/>
</dbReference>
<dbReference type="PDB" id="3ONC">
    <property type="method" value="X-ray"/>
    <property type="resolution" value="1.06 A"/>
    <property type="chains" value="A=2-316"/>
</dbReference>
<dbReference type="PDB" id="3P2V">
    <property type="method" value="X-ray"/>
    <property type="resolution" value="1.69 A"/>
    <property type="chains" value="A=1-316"/>
</dbReference>
<dbReference type="PDB" id="3Q65">
    <property type="method" value="X-ray"/>
    <property type="resolution" value="2.09 A"/>
    <property type="chains" value="A/B=1-316"/>
</dbReference>
<dbReference type="PDB" id="3Q67">
    <property type="method" value="X-ray"/>
    <property type="resolution" value="1.55 A"/>
    <property type="chains" value="A/B=1-316"/>
</dbReference>
<dbReference type="PDB" id="3RX2">
    <property type="method" value="X-ray"/>
    <property type="resolution" value="1.90 A"/>
    <property type="chains" value="A=1-316"/>
</dbReference>
<dbReference type="PDB" id="3RX3">
    <property type="method" value="X-ray"/>
    <property type="resolution" value="1.90 A"/>
    <property type="chains" value="A=1-316"/>
</dbReference>
<dbReference type="PDB" id="3RX4">
    <property type="method" value="X-ray"/>
    <property type="resolution" value="2.00 A"/>
    <property type="chains" value="A=1-316"/>
</dbReference>
<dbReference type="PDB" id="3S3G">
    <property type="method" value="X-ray"/>
    <property type="resolution" value="1.80 A"/>
    <property type="chains" value="A=1-316"/>
</dbReference>
<dbReference type="PDB" id="3T42">
    <property type="method" value="X-ray"/>
    <property type="resolution" value="1.28 A"/>
    <property type="chains" value="A=1-316"/>
</dbReference>
<dbReference type="PDB" id="3U2C">
    <property type="method" value="X-ray"/>
    <property type="resolution" value="1.00 A"/>
    <property type="chains" value="A=1-316"/>
</dbReference>
<dbReference type="PDB" id="3V35">
    <property type="method" value="X-ray"/>
    <property type="resolution" value="1.90 A"/>
    <property type="chains" value="A=1-316"/>
</dbReference>
<dbReference type="PDB" id="3V36">
    <property type="method" value="X-ray"/>
    <property type="resolution" value="2.00 A"/>
    <property type="chains" value="A=1-316"/>
</dbReference>
<dbReference type="PDB" id="4GCA">
    <property type="method" value="X-ray"/>
    <property type="resolution" value="0.90 A"/>
    <property type="chains" value="A=2-316"/>
</dbReference>
<dbReference type="PDB" id="4GQ0">
    <property type="method" value="X-ray"/>
    <property type="resolution" value="2.10 A"/>
    <property type="chains" value="A=1-316"/>
</dbReference>
<dbReference type="PDB" id="4IGS">
    <property type="method" value="X-ray"/>
    <property type="resolution" value="0.85 A"/>
    <property type="chains" value="A=1-316"/>
</dbReference>
<dbReference type="PDB" id="4JIR">
    <property type="method" value="X-ray"/>
    <property type="resolution" value="2.00 A"/>
    <property type="chains" value="A=1-316"/>
</dbReference>
<dbReference type="PDB" id="4LAU">
    <property type="method" value="X-ray"/>
    <property type="resolution" value="0.84 A"/>
    <property type="chains" value="A=1-316"/>
</dbReference>
<dbReference type="PDB" id="4LAZ">
    <property type="method" value="X-ray"/>
    <property type="resolution" value="0.85 A"/>
    <property type="chains" value="A=1-316"/>
</dbReference>
<dbReference type="PDB" id="4LB3">
    <property type="method" value="X-ray"/>
    <property type="resolution" value="0.80 A"/>
    <property type="chains" value="A=1-316"/>
</dbReference>
<dbReference type="PDB" id="4LB4">
    <property type="method" value="X-ray"/>
    <property type="resolution" value="0.80 A"/>
    <property type="chains" value="A=1-316"/>
</dbReference>
<dbReference type="PDB" id="4LBR">
    <property type="method" value="X-ray"/>
    <property type="resolution" value="0.80 A"/>
    <property type="chains" value="A=1-316"/>
</dbReference>
<dbReference type="PDB" id="4LBS">
    <property type="method" value="X-ray"/>
    <property type="resolution" value="0.76 A"/>
    <property type="chains" value="A=1-316"/>
</dbReference>
<dbReference type="PDB" id="4NKC">
    <property type="method" value="X-ray"/>
    <property type="resolution" value="1.12 A"/>
    <property type="chains" value="A=2-316"/>
</dbReference>
<dbReference type="PDB" id="4PR4">
    <property type="method" value="X-ray"/>
    <property type="resolution" value="1.06 A"/>
    <property type="chains" value="A=2-316"/>
</dbReference>
<dbReference type="PDB" id="4PRR">
    <property type="method" value="X-ray"/>
    <property type="resolution" value="1.01 A"/>
    <property type="chains" value="A=2-316"/>
</dbReference>
<dbReference type="PDB" id="4PRT">
    <property type="method" value="X-ray"/>
    <property type="resolution" value="0.96 A"/>
    <property type="chains" value="A=1-316"/>
</dbReference>
<dbReference type="PDB" id="4PUU">
    <property type="method" value="X-ray"/>
    <property type="resolution" value="1.14 A"/>
    <property type="chains" value="A=1-316"/>
</dbReference>
<dbReference type="PDB" id="4PUW">
    <property type="method" value="X-ray"/>
    <property type="resolution" value="1.12 A"/>
    <property type="chains" value="A=1-316"/>
</dbReference>
<dbReference type="PDB" id="4Q7B">
    <property type="method" value="X-ray"/>
    <property type="resolution" value="1.19 A"/>
    <property type="chains" value="A=2-316"/>
</dbReference>
<dbReference type="PDB" id="4QBX">
    <property type="method" value="X-ray"/>
    <property type="resolution" value="0.98 A"/>
    <property type="chains" value="A=1-316"/>
</dbReference>
<dbReference type="PDB" id="4QR6">
    <property type="method" value="X-ray"/>
    <property type="resolution" value="1.05 A"/>
    <property type="chains" value="A=1-316"/>
</dbReference>
<dbReference type="PDB" id="4QX4">
    <property type="method" value="X-ray"/>
    <property type="resolution" value="1.26 A"/>
    <property type="chains" value="A=1-316"/>
</dbReference>
<dbReference type="PDB" id="4QXI">
    <property type="method" value="X-ray"/>
    <property type="resolution" value="0.87 A"/>
    <property type="chains" value="A=1-316"/>
</dbReference>
<dbReference type="PDB" id="4RPQ">
    <property type="method" value="X-ray"/>
    <property type="resolution" value="1.20 A"/>
    <property type="chains" value="A=2-316"/>
</dbReference>
<dbReference type="PDB" id="4XZH">
    <property type="method" value="X-ray"/>
    <property type="resolution" value="1.00 A"/>
    <property type="chains" value="A/B=1-316"/>
</dbReference>
<dbReference type="PDB" id="4XZI">
    <property type="method" value="X-ray"/>
    <property type="resolution" value="2.45 A"/>
    <property type="chains" value="A=1-316"/>
</dbReference>
<dbReference type="PDB" id="4YS1">
    <property type="method" value="X-ray"/>
    <property type="resolution" value="1.07 A"/>
    <property type="chains" value="A=1-316"/>
</dbReference>
<dbReference type="PDB" id="4YU1">
    <property type="method" value="X-ray"/>
    <property type="resolution" value="1.02 A"/>
    <property type="chains" value="A=1-316"/>
</dbReference>
<dbReference type="PDB" id="5HA7">
    <property type="method" value="X-ray"/>
    <property type="resolution" value="1.65 A"/>
    <property type="chains" value="A/B=1-316"/>
</dbReference>
<dbReference type="PDB" id="5OU0">
    <property type="method" value="X-ray"/>
    <property type="resolution" value="0.94 A"/>
    <property type="chains" value="A=1-316"/>
</dbReference>
<dbReference type="PDB" id="5OUJ">
    <property type="method" value="X-ray"/>
    <property type="resolution" value="0.96 A"/>
    <property type="chains" value="A=1-316"/>
</dbReference>
<dbReference type="PDB" id="5OUK">
    <property type="method" value="X-ray"/>
    <property type="resolution" value="0.96 A"/>
    <property type="chains" value="A=1-316"/>
</dbReference>
<dbReference type="PDB" id="6F7R">
    <property type="method" value="X-ray"/>
    <property type="resolution" value="0.92 A"/>
    <property type="chains" value="A=1-316"/>
</dbReference>
<dbReference type="PDB" id="6F81">
    <property type="method" value="X-ray"/>
    <property type="resolution" value="0.97 A"/>
    <property type="chains" value="A=1-316"/>
</dbReference>
<dbReference type="PDB" id="6F82">
    <property type="method" value="X-ray"/>
    <property type="resolution" value="1.03 A"/>
    <property type="chains" value="A=1-316"/>
</dbReference>
<dbReference type="PDB" id="6F84">
    <property type="method" value="X-ray"/>
    <property type="resolution" value="1.09 A"/>
    <property type="chains" value="A=1-316"/>
</dbReference>
<dbReference type="PDB" id="6F8O">
    <property type="method" value="X-ray"/>
    <property type="resolution" value="1.17 A"/>
    <property type="chains" value="A=1-316"/>
</dbReference>
<dbReference type="PDB" id="6SYW">
    <property type="method" value="X-ray"/>
    <property type="resolution" value="0.93 A"/>
    <property type="chains" value="A=1-316"/>
</dbReference>
<dbReference type="PDB" id="6T27">
    <property type="method" value="X-ray"/>
    <property type="resolution" value="1.11 A"/>
    <property type="chains" value="A=1-316"/>
</dbReference>
<dbReference type="PDB" id="6T3P">
    <property type="method" value="X-ray"/>
    <property type="resolution" value="0.97 A"/>
    <property type="chains" value="A=1-316"/>
</dbReference>
<dbReference type="PDB" id="6T5G">
    <property type="method" value="X-ray"/>
    <property type="resolution" value="1.28 A"/>
    <property type="chains" value="A=1-316"/>
</dbReference>
<dbReference type="PDB" id="6T7Q">
    <property type="method" value="X-ray"/>
    <property type="resolution" value="1.01 A"/>
    <property type="chains" value="A=1-316"/>
</dbReference>
<dbReference type="PDB" id="6TD8">
    <property type="method" value="X-ray"/>
    <property type="resolution" value="0.97 A"/>
    <property type="chains" value="A=1-316"/>
</dbReference>
<dbReference type="PDB" id="6TUC">
    <property type="method" value="X-ray"/>
    <property type="resolution" value="1.06 A"/>
    <property type="chains" value="A=1-316"/>
</dbReference>
<dbReference type="PDB" id="6TUF">
    <property type="method" value="X-ray"/>
    <property type="resolution" value="1.15 A"/>
    <property type="chains" value="A=1-316"/>
</dbReference>
<dbReference type="PDB" id="6TXP">
    <property type="method" value="X-ray"/>
    <property type="resolution" value="0.95 A"/>
    <property type="chains" value="A=1-316"/>
</dbReference>
<dbReference type="PDB" id="6XUM">
    <property type="method" value="X-ray"/>
    <property type="resolution" value="0.97 A"/>
    <property type="chains" value="A=1-316"/>
</dbReference>
<dbReference type="PDB" id="6Y03">
    <property type="method" value="X-ray"/>
    <property type="resolution" value="1.69 A"/>
    <property type="chains" value="A=1-316"/>
</dbReference>
<dbReference type="PDB" id="6Y1P">
    <property type="method" value="X-ray"/>
    <property type="resolution" value="0.94 A"/>
    <property type="chains" value="A=1-316"/>
</dbReference>
<dbReference type="PDB" id="8A4N">
    <property type="method" value="X-ray"/>
    <property type="resolution" value="0.93 A"/>
    <property type="chains" value="A=1-316"/>
</dbReference>
<dbReference type="PDB" id="8AE9">
    <property type="method" value="X-ray"/>
    <property type="resolution" value="0.95 A"/>
    <property type="chains" value="A=1-316"/>
</dbReference>
<dbReference type="PDB" id="8AQG">
    <property type="method" value="X-ray"/>
    <property type="resolution" value="0.95 A"/>
    <property type="chains" value="A=1-313"/>
</dbReference>
<dbReference type="PDB" id="8AQP">
    <property type="method" value="X-ray"/>
    <property type="resolution" value="0.96 A"/>
    <property type="chains" value="A=1-316"/>
</dbReference>
<dbReference type="PDB" id="8AUU">
    <property type="method" value="X-ray"/>
    <property type="resolution" value="0.95 A"/>
    <property type="chains" value="A=1-316"/>
</dbReference>
<dbReference type="PDB" id="8B34">
    <property type="method" value="X-ray"/>
    <property type="resolution" value="0.97 A"/>
    <property type="chains" value="A=1-316"/>
</dbReference>
<dbReference type="PDB" id="8B3N">
    <property type="method" value="X-ray"/>
    <property type="resolution" value="1.03 A"/>
    <property type="chains" value="A=1-316"/>
</dbReference>
<dbReference type="PDB" id="8B3R">
    <property type="method" value="X-ray"/>
    <property type="resolution" value="0.96 A"/>
    <property type="chains" value="A=1-316"/>
</dbReference>
<dbReference type="PDB" id="8B66">
    <property type="method" value="X-ray"/>
    <property type="resolution" value="0.95 A"/>
    <property type="chains" value="A=1-316"/>
</dbReference>
<dbReference type="PDB" id="8BJL">
    <property type="method" value="X-ray"/>
    <property type="resolution" value="0.97 A"/>
    <property type="chains" value="A=1-316"/>
</dbReference>
<dbReference type="PDB" id="8CNF">
    <property type="method" value="X-ray"/>
    <property type="resolution" value="0.95 A"/>
    <property type="chains" value="A=1-316"/>
</dbReference>
<dbReference type="PDB" id="8CNP">
    <property type="method" value="X-ray"/>
    <property type="resolution" value="0.94 A"/>
    <property type="chains" value="A=1-316"/>
</dbReference>
<dbReference type="PDB" id="8FH5">
    <property type="method" value="X-ray"/>
    <property type="resolution" value="1.62 A"/>
    <property type="chains" value="A=2-316"/>
</dbReference>
<dbReference type="PDB" id="8FH6">
    <property type="method" value="X-ray"/>
    <property type="resolution" value="1.95 A"/>
    <property type="chains" value="A=1-316"/>
</dbReference>
<dbReference type="PDB" id="8FH7">
    <property type="method" value="X-ray"/>
    <property type="resolution" value="1.45 A"/>
    <property type="chains" value="A=1-316"/>
</dbReference>
<dbReference type="PDB" id="8FH8">
    <property type="method" value="X-ray"/>
    <property type="resolution" value="1.60 A"/>
    <property type="chains" value="A=1-316"/>
</dbReference>
<dbReference type="PDB" id="8FH9">
    <property type="method" value="X-ray"/>
    <property type="resolution" value="1.70 A"/>
    <property type="chains" value="A=1-316"/>
</dbReference>
<dbReference type="PDB" id="8OZ2">
    <property type="method" value="X-ray"/>
    <property type="resolution" value="1.04 A"/>
    <property type="chains" value="A=1-316"/>
</dbReference>
<dbReference type="PDB" id="8P2R">
    <property type="method" value="X-ray"/>
    <property type="resolution" value="1.25 A"/>
    <property type="chains" value="A=1-316"/>
</dbReference>
<dbReference type="PDBsum" id="1ABN"/>
<dbReference type="PDBsum" id="1ADS"/>
<dbReference type="PDBsum" id="1AZ1"/>
<dbReference type="PDBsum" id="1AZ2"/>
<dbReference type="PDBsum" id="1EF3"/>
<dbReference type="PDBsum" id="1EL3"/>
<dbReference type="PDBsum" id="1IEI"/>
<dbReference type="PDBsum" id="1MAR"/>
<dbReference type="PDBsum" id="1PWL"/>
<dbReference type="PDBsum" id="1PWM"/>
<dbReference type="PDBsum" id="1T40"/>
<dbReference type="PDBsum" id="1T41"/>
<dbReference type="PDBsum" id="1US0"/>
<dbReference type="PDBsum" id="1X96"/>
<dbReference type="PDBsum" id="1X97"/>
<dbReference type="PDBsum" id="1X98"/>
<dbReference type="PDBsum" id="1XGD"/>
<dbReference type="PDBsum" id="1Z3N"/>
<dbReference type="PDBsum" id="1Z89"/>
<dbReference type="PDBsum" id="1Z8A"/>
<dbReference type="PDBsum" id="2ACQ"/>
<dbReference type="PDBsum" id="2ACR"/>
<dbReference type="PDBsum" id="2ACS"/>
<dbReference type="PDBsum" id="2ACU"/>
<dbReference type="PDBsum" id="2AGT"/>
<dbReference type="PDBsum" id="2DUX"/>
<dbReference type="PDBsum" id="2DUZ"/>
<dbReference type="PDBsum" id="2DV0"/>
<dbReference type="PDBsum" id="2F2K"/>
<dbReference type="PDBsum" id="2FZ8"/>
<dbReference type="PDBsum" id="2FZ9"/>
<dbReference type="PDBsum" id="2FZB"/>
<dbReference type="PDBsum" id="2FZD"/>
<dbReference type="PDBsum" id="2HV5"/>
<dbReference type="PDBsum" id="2HVN"/>
<dbReference type="PDBsum" id="2HVO"/>
<dbReference type="PDBsum" id="2I16"/>
<dbReference type="PDBsum" id="2I17"/>
<dbReference type="PDBsum" id="2IKG"/>
<dbReference type="PDBsum" id="2IKH"/>
<dbReference type="PDBsum" id="2IKI"/>
<dbReference type="PDBsum" id="2IKJ"/>
<dbReference type="PDBsum" id="2INE"/>
<dbReference type="PDBsum" id="2INZ"/>
<dbReference type="PDBsum" id="2IPW"/>
<dbReference type="PDBsum" id="2IQ0"/>
<dbReference type="PDBsum" id="2IQD"/>
<dbReference type="PDBsum" id="2IS7"/>
<dbReference type="PDBsum" id="2ISF"/>
<dbReference type="PDBsum" id="2J8T"/>
<dbReference type="PDBsum" id="2NVC"/>
<dbReference type="PDBsum" id="2NVD"/>
<dbReference type="PDBsum" id="2PD5"/>
<dbReference type="PDBsum" id="2PD9"/>
<dbReference type="PDBsum" id="2PDB"/>
<dbReference type="PDBsum" id="2PDC"/>
<dbReference type="PDBsum" id="2PDF"/>
<dbReference type="PDBsum" id="2PDG"/>
<dbReference type="PDBsum" id="2PDH"/>
<dbReference type="PDBsum" id="2PDI"/>
<dbReference type="PDBsum" id="2PDJ"/>
<dbReference type="PDBsum" id="2PDK"/>
<dbReference type="PDBsum" id="2PDL"/>
<dbReference type="PDBsum" id="2PDM"/>
<dbReference type="PDBsum" id="2PDN"/>
<dbReference type="PDBsum" id="2PDP"/>
<dbReference type="PDBsum" id="2PDQ"/>
<dbReference type="PDBsum" id="2PDU"/>
<dbReference type="PDBsum" id="2PDW"/>
<dbReference type="PDBsum" id="2PDX"/>
<dbReference type="PDBsum" id="2PDY"/>
<dbReference type="PDBsum" id="2PEV"/>
<dbReference type="PDBsum" id="2PF8"/>
<dbReference type="PDBsum" id="2PFH"/>
<dbReference type="PDBsum" id="2PZN"/>
<dbReference type="PDBsum" id="2QXW"/>
<dbReference type="PDBsum" id="2R24"/>
<dbReference type="PDBsum" id="3BCJ"/>
<dbReference type="PDBsum" id="3DN5"/>
<dbReference type="PDBsum" id="3G5E"/>
<dbReference type="PDBsum" id="3GHR"/>
<dbReference type="PDBsum" id="3GHS"/>
<dbReference type="PDBsum" id="3GHT"/>
<dbReference type="PDBsum" id="3GHU"/>
<dbReference type="PDBsum" id="3LBO"/>
<dbReference type="PDBsum" id="3LD5"/>
<dbReference type="PDBsum" id="3LEN"/>
<dbReference type="PDBsum" id="3LEP"/>
<dbReference type="PDBsum" id="3LQG"/>
<dbReference type="PDBsum" id="3LQL"/>
<dbReference type="PDBsum" id="3LZ3"/>
<dbReference type="PDBsum" id="3LZ5"/>
<dbReference type="PDBsum" id="3M0I"/>
<dbReference type="PDBsum" id="3M4H"/>
<dbReference type="PDBsum" id="3M64"/>
<dbReference type="PDBsum" id="3MB9"/>
<dbReference type="PDBsum" id="3MC5"/>
<dbReference type="PDBsum" id="3ONB"/>
<dbReference type="PDBsum" id="3ONC"/>
<dbReference type="PDBsum" id="3P2V"/>
<dbReference type="PDBsum" id="3Q65"/>
<dbReference type="PDBsum" id="3Q67"/>
<dbReference type="PDBsum" id="3RX2"/>
<dbReference type="PDBsum" id="3RX3"/>
<dbReference type="PDBsum" id="3RX4"/>
<dbReference type="PDBsum" id="3S3G"/>
<dbReference type="PDBsum" id="3T42"/>
<dbReference type="PDBsum" id="3U2C"/>
<dbReference type="PDBsum" id="3V35"/>
<dbReference type="PDBsum" id="3V36"/>
<dbReference type="PDBsum" id="4GCA"/>
<dbReference type="PDBsum" id="4GQ0"/>
<dbReference type="PDBsum" id="4IGS"/>
<dbReference type="PDBsum" id="4JIR"/>
<dbReference type="PDBsum" id="4LAU"/>
<dbReference type="PDBsum" id="4LAZ"/>
<dbReference type="PDBsum" id="4LB3"/>
<dbReference type="PDBsum" id="4LB4"/>
<dbReference type="PDBsum" id="4LBR"/>
<dbReference type="PDBsum" id="4LBS"/>
<dbReference type="PDBsum" id="4NKC"/>
<dbReference type="PDBsum" id="4PR4"/>
<dbReference type="PDBsum" id="4PRR"/>
<dbReference type="PDBsum" id="4PRT"/>
<dbReference type="PDBsum" id="4PUU"/>
<dbReference type="PDBsum" id="4PUW"/>
<dbReference type="PDBsum" id="4Q7B"/>
<dbReference type="PDBsum" id="4QBX"/>
<dbReference type="PDBsum" id="4QR6"/>
<dbReference type="PDBsum" id="4QX4"/>
<dbReference type="PDBsum" id="4QXI"/>
<dbReference type="PDBsum" id="4RPQ"/>
<dbReference type="PDBsum" id="4XZH"/>
<dbReference type="PDBsum" id="4XZI"/>
<dbReference type="PDBsum" id="4YS1"/>
<dbReference type="PDBsum" id="4YU1"/>
<dbReference type="PDBsum" id="5HA7"/>
<dbReference type="PDBsum" id="5OU0"/>
<dbReference type="PDBsum" id="5OUJ"/>
<dbReference type="PDBsum" id="5OUK"/>
<dbReference type="PDBsum" id="6F7R"/>
<dbReference type="PDBsum" id="6F81"/>
<dbReference type="PDBsum" id="6F82"/>
<dbReference type="PDBsum" id="6F84"/>
<dbReference type="PDBsum" id="6F8O"/>
<dbReference type="PDBsum" id="6SYW"/>
<dbReference type="PDBsum" id="6T27"/>
<dbReference type="PDBsum" id="6T3P"/>
<dbReference type="PDBsum" id="6T5G"/>
<dbReference type="PDBsum" id="6T7Q"/>
<dbReference type="PDBsum" id="6TD8"/>
<dbReference type="PDBsum" id="6TUC"/>
<dbReference type="PDBsum" id="6TUF"/>
<dbReference type="PDBsum" id="6TXP"/>
<dbReference type="PDBsum" id="6XUM"/>
<dbReference type="PDBsum" id="6Y03"/>
<dbReference type="PDBsum" id="6Y1P"/>
<dbReference type="PDBsum" id="8A4N"/>
<dbReference type="PDBsum" id="8AE9"/>
<dbReference type="PDBsum" id="8AQG"/>
<dbReference type="PDBsum" id="8AQP"/>
<dbReference type="PDBsum" id="8AUU"/>
<dbReference type="PDBsum" id="8B34"/>
<dbReference type="PDBsum" id="8B3N"/>
<dbReference type="PDBsum" id="8B3R"/>
<dbReference type="PDBsum" id="8B66"/>
<dbReference type="PDBsum" id="8BJL"/>
<dbReference type="PDBsum" id="8CNF"/>
<dbReference type="PDBsum" id="8CNP"/>
<dbReference type="PDBsum" id="8FH5"/>
<dbReference type="PDBsum" id="8FH6"/>
<dbReference type="PDBsum" id="8FH7"/>
<dbReference type="PDBsum" id="8FH8"/>
<dbReference type="PDBsum" id="8FH9"/>
<dbReference type="PDBsum" id="8OZ2"/>
<dbReference type="PDBsum" id="8P2R"/>
<dbReference type="SASBDB" id="P15121"/>
<dbReference type="SMR" id="P15121"/>
<dbReference type="BioGRID" id="106732">
    <property type="interactions" value="82"/>
</dbReference>
<dbReference type="FunCoup" id="P15121">
    <property type="interactions" value="1356"/>
</dbReference>
<dbReference type="IntAct" id="P15121">
    <property type="interactions" value="20"/>
</dbReference>
<dbReference type="MINT" id="P15121"/>
<dbReference type="STRING" id="9606.ENSP00000285930"/>
<dbReference type="BindingDB" id="P15121"/>
<dbReference type="ChEMBL" id="CHEMBL1900"/>
<dbReference type="DrugBank" id="DB07028">
    <property type="generic name" value="(2-{[(4-BROMO-2-FLUOROBENZYL)AMINO]CARBONYL}-5-CHLOROPHENOXY)ACETIC ACID"/>
</dbReference>
<dbReference type="DrugBank" id="DB07030">
    <property type="generic name" value="(5-CHLORO-2-{[(3-NITROBENZYL)AMINO]CARBONYL}PHENOXY)ACETIC ACID"/>
</dbReference>
<dbReference type="DrugBank" id="DB07450">
    <property type="generic name" value="(R)-minalrestat"/>
</dbReference>
<dbReference type="DrugBank" id="DB02101">
    <property type="generic name" value="(S,R)-fidarestat"/>
</dbReference>
<dbReference type="DrugBank" id="DB08449">
    <property type="generic name" value="2-(3-((4,5,7-trifluorobenzo[d]thiazol-2-yl)methyl)-1H-pyrrolo[2,3-b]pyridin-1-yl)acetic acid"/>
</dbReference>
<dbReference type="DrugBank" id="DB08000">
    <property type="generic name" value="2-(CARBOXYMETHYL)-1-OXO-1,2-DIHYDRONAPHTHO[1,2-D]ISOTHIAZOLE-4-CARBOXYLIC ACID 3,3-DIOXIDE"/>
</dbReference>
<dbReference type="DrugBank" id="DB07139">
    <property type="generic name" value="3-[5-(3-nitrophenyl)thiophen-2-yl]propanoic acid"/>
</dbReference>
<dbReference type="DrugBank" id="DB07498">
    <property type="generic name" value="4-[3-(3-NITROPHENYL)-1,2,4-OXADIAZOL-5-YL]BUTANOIC ACID"/>
</dbReference>
<dbReference type="DrugBank" id="DB02007">
    <property type="generic name" value="alpha-D-glucose 6-phosphate"/>
</dbReference>
<dbReference type="DrugBank" id="DB02020">
    <property type="generic name" value="Alrestatin"/>
</dbReference>
<dbReference type="DrugBank" id="DB07352">
    <property type="generic name" value="Apigenin"/>
</dbReference>
<dbReference type="DrugBank" id="DB11859">
    <property type="generic name" value="Brexanolone"/>
</dbReference>
<dbReference type="DrugBank" id="DB02994">
    <property type="generic name" value="Cacodylic acid"/>
</dbReference>
<dbReference type="DrugBank" id="DB15581">
    <property type="generic name" value="Chrysin"/>
</dbReference>
<dbReference type="DrugBank" id="DB04272">
    <property type="generic name" value="Citric acid"/>
</dbReference>
<dbReference type="DrugBank" id="DB07187">
    <property type="generic name" value="CP-744809"/>
</dbReference>
<dbReference type="DrugBank" id="DB13182">
    <property type="generic name" value="Daidzein"/>
</dbReference>
<dbReference type="DrugBank" id="DB00694">
    <property type="generic name" value="Daunorubicin"/>
</dbReference>
<dbReference type="DrugBank" id="DB00997">
    <property type="generic name" value="Doxorubicin"/>
</dbReference>
<dbReference type="DrugBank" id="DB15293">
    <property type="generic name" value="Epalrestat"/>
</dbReference>
<dbReference type="DrugBank" id="DB06246">
    <property type="generic name" value="Exisulind"/>
</dbReference>
<dbReference type="DrugBank" id="DB01039">
    <property type="generic name" value="Fenofibrate"/>
</dbReference>
<dbReference type="DrugBank" id="DB02021">
    <property type="generic name" value="Fidarestat"/>
</dbReference>
<dbReference type="DrugBank" id="DB16707">
    <property type="generic name" value="Gavorestat"/>
</dbReference>
<dbReference type="DrugBank" id="DB00143">
    <property type="generic name" value="Glutathione"/>
</dbReference>
<dbReference type="DrugBank" id="DB02834">
    <property type="generic name" value="IDD552"/>
</dbReference>
<dbReference type="DrugBank" id="DB08084">
    <property type="generic name" value="IDD594"/>
</dbReference>
<dbReference type="DrugBank" id="DB01689">
    <property type="generic name" value="Inhibitor Idd 384"/>
</dbReference>
<dbReference type="DrugBank" id="DB12665">
    <property type="generic name" value="Isoquercetin"/>
</dbReference>
<dbReference type="DrugBank" id="DB01852">
    <property type="generic name" value="Kaempherol"/>
</dbReference>
<dbReference type="DrugBank" id="DB07063">
    <property type="generic name" value="Lidorestat"/>
</dbReference>
<dbReference type="DrugBank" id="DB06077">
    <property type="generic name" value="Lumateperone"/>
</dbReference>
<dbReference type="DrugBank" id="DB02518">
    <property type="generic name" value="N-Acetylalanine"/>
</dbReference>
<dbReference type="DrugBank" id="DB00157">
    <property type="generic name" value="NADH"/>
</dbReference>
<dbReference type="DrugBank" id="DB03461">
    <property type="generic name" value="Nicotinamide adenine dinucleotide phosphate"/>
</dbReference>
<dbReference type="DrugBank" id="DB05383">
    <property type="generic name" value="Pimagedine"/>
</dbReference>
<dbReference type="DrugBank" id="DB05533">
    <property type="generic name" value="QR-333"/>
</dbReference>
<dbReference type="DrugBank" id="DB05327">
    <property type="generic name" value="Ranirestat"/>
</dbReference>
<dbReference type="DrugBank" id="DB02712">
    <property type="generic name" value="Sorbinil"/>
</dbReference>
<dbReference type="DrugBank" id="DB00605">
    <property type="generic name" value="Sulindac"/>
</dbReference>
<dbReference type="DrugBank" id="DB02383">
    <property type="generic name" value="Tolrestat"/>
</dbReference>
<dbReference type="DrugBank" id="DB02132">
    <property type="generic name" value="Zenarestat"/>
</dbReference>
<dbReference type="DrugBank" id="DB08772">
    <property type="generic name" value="Zopolrestat"/>
</dbReference>
<dbReference type="DrugBank" id="DB07093">
    <property type="generic name" value="{3-[(5-CHLORO-1,3-BENZOTHIAZOL-2-YL)METHYL]-2,4-DIOXO-3,4-DIHYDROPYRIMIDIN-1(2H)-YL}ACETIC ACID"/>
</dbReference>
<dbReference type="DrugBank" id="DB07999">
    <property type="generic name" value="{4-[(CARBOXYMETHOXY)CARBONYL]-3,3-DIOXIDO-1-OXONAPHTHO[1,2-D]ISOTHIAZOL-2(1H)-YL}ACETIC ACID"/>
</dbReference>
<dbReference type="DrugBank" id="DB08098">
    <property type="generic name" value="{[5-(5-nitro-2-furyl)-1,3,4-oxadiazol-2-yl]thio}acetic acid"/>
</dbReference>
<dbReference type="DrugCentral" id="P15121"/>
<dbReference type="GuidetoPHARMACOLOGY" id="2768"/>
<dbReference type="SwissLipids" id="SLP:000001112"/>
<dbReference type="GlyGen" id="P15121">
    <property type="glycosylation" value="1 site, 1 O-linked glycan (1 site)"/>
</dbReference>
<dbReference type="iPTMnet" id="P15121"/>
<dbReference type="PhosphoSitePlus" id="P15121"/>
<dbReference type="SwissPalm" id="P15121"/>
<dbReference type="BioMuta" id="AKR1B1"/>
<dbReference type="DMDM" id="113596"/>
<dbReference type="REPRODUCTION-2DPAGE" id="IPI00413641"/>
<dbReference type="REPRODUCTION-2DPAGE" id="P15121"/>
<dbReference type="jPOST" id="P15121"/>
<dbReference type="MassIVE" id="P15121"/>
<dbReference type="PaxDb" id="9606-ENSP00000285930"/>
<dbReference type="PeptideAtlas" id="P15121"/>
<dbReference type="ProteomicsDB" id="53108"/>
<dbReference type="Pumba" id="P15121"/>
<dbReference type="TopDownProteomics" id="P15121"/>
<dbReference type="Antibodypedia" id="4365">
    <property type="antibodies" value="609 antibodies from 42 providers"/>
</dbReference>
<dbReference type="CPTC" id="P15121">
    <property type="antibodies" value="3 antibodies"/>
</dbReference>
<dbReference type="DNASU" id="231"/>
<dbReference type="Ensembl" id="ENST00000285930.9">
    <property type="protein sequence ID" value="ENSP00000285930.3"/>
    <property type="gene ID" value="ENSG00000085662.14"/>
</dbReference>
<dbReference type="GeneID" id="231"/>
<dbReference type="KEGG" id="hsa:231"/>
<dbReference type="MANE-Select" id="ENST00000285930.9">
    <property type="protein sequence ID" value="ENSP00000285930.3"/>
    <property type="RefSeq nucleotide sequence ID" value="NM_001628.4"/>
    <property type="RefSeq protein sequence ID" value="NP_001619.1"/>
</dbReference>
<dbReference type="UCSC" id="uc003vrp.2">
    <property type="organism name" value="human"/>
</dbReference>
<dbReference type="AGR" id="HGNC:381"/>
<dbReference type="CTD" id="231"/>
<dbReference type="DisGeNET" id="231"/>
<dbReference type="GeneCards" id="AKR1B1"/>
<dbReference type="HGNC" id="HGNC:381">
    <property type="gene designation" value="AKR1B1"/>
</dbReference>
<dbReference type="HPA" id="ENSG00000085662">
    <property type="expression patterns" value="Tissue enriched (adrenal)"/>
</dbReference>
<dbReference type="MIM" id="103880">
    <property type="type" value="gene"/>
</dbReference>
<dbReference type="neXtProt" id="NX_P15121"/>
<dbReference type="OpenTargets" id="ENSG00000085662"/>
<dbReference type="PharmGKB" id="PA24675"/>
<dbReference type="VEuPathDB" id="HostDB:ENSG00000085662"/>
<dbReference type="eggNOG" id="KOG1577">
    <property type="taxonomic scope" value="Eukaryota"/>
</dbReference>
<dbReference type="GeneTree" id="ENSGT00940000153272"/>
<dbReference type="HOGENOM" id="CLU_023205_0_0_1"/>
<dbReference type="InParanoid" id="P15121"/>
<dbReference type="OMA" id="LWNSQHH"/>
<dbReference type="OrthoDB" id="416253at2759"/>
<dbReference type="PAN-GO" id="P15121">
    <property type="GO annotations" value="2 GO annotations based on evolutionary models"/>
</dbReference>
<dbReference type="PhylomeDB" id="P15121"/>
<dbReference type="TreeFam" id="TF106492"/>
<dbReference type="BioCyc" id="MetaCyc:HS01502-MONOMER"/>
<dbReference type="BRENDA" id="1.1.1.188">
    <property type="organism ID" value="2681"/>
</dbReference>
<dbReference type="BRENDA" id="1.1.1.21">
    <property type="organism ID" value="2681"/>
</dbReference>
<dbReference type="PathwayCommons" id="P15121"/>
<dbReference type="Reactome" id="R-HSA-196108">
    <property type="pathway name" value="Pregnenolone biosynthesis"/>
</dbReference>
<dbReference type="Reactome" id="R-HSA-5652227">
    <property type="pathway name" value="Fructose biosynthesis"/>
</dbReference>
<dbReference type="SABIO-RK" id="P15121"/>
<dbReference type="SignaLink" id="P15121"/>
<dbReference type="BioGRID-ORCS" id="231">
    <property type="hits" value="19 hits in 1179 CRISPR screens"/>
</dbReference>
<dbReference type="CD-CODE" id="91857CE7">
    <property type="entry name" value="Nucleolus"/>
</dbReference>
<dbReference type="ChiTaRS" id="AKR1B1">
    <property type="organism name" value="human"/>
</dbReference>
<dbReference type="EvolutionaryTrace" id="P15121"/>
<dbReference type="GeneWiki" id="AKR1B1"/>
<dbReference type="GenomeRNAi" id="231"/>
<dbReference type="Pharos" id="P15121">
    <property type="development level" value="Tclin"/>
</dbReference>
<dbReference type="PRO" id="PR:P15121"/>
<dbReference type="Proteomes" id="UP000005640">
    <property type="component" value="Chromosome 7"/>
</dbReference>
<dbReference type="RNAct" id="P15121">
    <property type="molecule type" value="protein"/>
</dbReference>
<dbReference type="Bgee" id="ENSG00000085662">
    <property type="expression patterns" value="Expressed in right adrenal gland cortex and 211 other cell types or tissues"/>
</dbReference>
<dbReference type="ExpressionAtlas" id="P15121">
    <property type="expression patterns" value="baseline and differential"/>
</dbReference>
<dbReference type="GO" id="GO:0005829">
    <property type="term" value="C:cytosol"/>
    <property type="evidence" value="ECO:0000314"/>
    <property type="project" value="HPA"/>
</dbReference>
<dbReference type="GO" id="GO:0070062">
    <property type="term" value="C:extracellular exosome"/>
    <property type="evidence" value="ECO:0007005"/>
    <property type="project" value="UniProtKB"/>
</dbReference>
<dbReference type="GO" id="GO:0005615">
    <property type="term" value="C:extracellular space"/>
    <property type="evidence" value="ECO:0000304"/>
    <property type="project" value="ProtInc"/>
</dbReference>
<dbReference type="GO" id="GO:0005739">
    <property type="term" value="C:mitochondrion"/>
    <property type="evidence" value="ECO:0006056"/>
    <property type="project" value="FlyBase"/>
</dbReference>
<dbReference type="GO" id="GO:0005654">
    <property type="term" value="C:nucleoplasm"/>
    <property type="evidence" value="ECO:0000314"/>
    <property type="project" value="HPA"/>
</dbReference>
<dbReference type="GO" id="GO:0004032">
    <property type="term" value="F:aldose reductase (NADPH) activity"/>
    <property type="evidence" value="ECO:0000314"/>
    <property type="project" value="UniProtKB"/>
</dbReference>
<dbReference type="GO" id="GO:0052650">
    <property type="term" value="F:all-trans-retinol dehydrogenase (NADP+) activity"/>
    <property type="evidence" value="ECO:0007669"/>
    <property type="project" value="UniProtKB-EC"/>
</dbReference>
<dbReference type="GO" id="GO:0047655">
    <property type="term" value="F:allyl-alcohol dehydrogenase activity"/>
    <property type="evidence" value="ECO:0007669"/>
    <property type="project" value="UniProtKB-EC"/>
</dbReference>
<dbReference type="GO" id="GO:0009055">
    <property type="term" value="F:electron transfer activity"/>
    <property type="evidence" value="ECO:0000304"/>
    <property type="project" value="UniProtKB"/>
</dbReference>
<dbReference type="GO" id="GO:0043795">
    <property type="term" value="F:glyceraldehyde oxidoreductase activity"/>
    <property type="evidence" value="ECO:0000314"/>
    <property type="project" value="UniProtKB"/>
</dbReference>
<dbReference type="GO" id="GO:0047956">
    <property type="term" value="F:glycerol dehydrogenase (NADP+) activity"/>
    <property type="evidence" value="ECO:0007669"/>
    <property type="project" value="RHEA"/>
</dbReference>
<dbReference type="GO" id="GO:0047939">
    <property type="term" value="F:L-glucuronate reductase activity"/>
    <property type="evidence" value="ECO:0007669"/>
    <property type="project" value="Ensembl"/>
</dbReference>
<dbReference type="GO" id="GO:0036130">
    <property type="term" value="F:prostaglandin H2 endoperoxidase reductase activity"/>
    <property type="evidence" value="ECO:0007669"/>
    <property type="project" value="RHEA"/>
</dbReference>
<dbReference type="GO" id="GO:0001758">
    <property type="term" value="F:retinal dehydrogenase activity"/>
    <property type="evidence" value="ECO:0000314"/>
    <property type="project" value="UniProtKB"/>
</dbReference>
<dbReference type="GO" id="GO:0006700">
    <property type="term" value="P:C21-steroid hormone biosynthetic process"/>
    <property type="evidence" value="ECO:0000304"/>
    <property type="project" value="Reactome"/>
</dbReference>
<dbReference type="GO" id="GO:0005975">
    <property type="term" value="P:carbohydrate metabolic process"/>
    <property type="evidence" value="ECO:0000304"/>
    <property type="project" value="ProtInc"/>
</dbReference>
<dbReference type="GO" id="GO:0071475">
    <property type="term" value="P:cellular hyperosmotic salinity response"/>
    <property type="evidence" value="ECO:0000314"/>
    <property type="project" value="UniProtKB"/>
</dbReference>
<dbReference type="GO" id="GO:0044597">
    <property type="term" value="P:daunorubicin metabolic process"/>
    <property type="evidence" value="ECO:0000315"/>
    <property type="project" value="UniProtKB"/>
</dbReference>
<dbReference type="GO" id="GO:0044598">
    <property type="term" value="P:doxorubicin metabolic process"/>
    <property type="evidence" value="ECO:0000315"/>
    <property type="project" value="UniProtKB"/>
</dbReference>
<dbReference type="GO" id="GO:0002070">
    <property type="term" value="P:epithelial cell maturation"/>
    <property type="evidence" value="ECO:0007669"/>
    <property type="project" value="Ensembl"/>
</dbReference>
<dbReference type="GO" id="GO:0046370">
    <property type="term" value="P:fructose biosynthetic process"/>
    <property type="evidence" value="ECO:0000304"/>
    <property type="project" value="Reactome"/>
</dbReference>
<dbReference type="GO" id="GO:0072205">
    <property type="term" value="P:metanephric collecting duct development"/>
    <property type="evidence" value="ECO:0007669"/>
    <property type="project" value="Ensembl"/>
</dbReference>
<dbReference type="GO" id="GO:0043066">
    <property type="term" value="P:negative regulation of apoptotic process"/>
    <property type="evidence" value="ECO:0007669"/>
    <property type="project" value="Ensembl"/>
</dbReference>
<dbReference type="GO" id="GO:0035809">
    <property type="term" value="P:regulation of urine volume"/>
    <property type="evidence" value="ECO:0007669"/>
    <property type="project" value="Ensembl"/>
</dbReference>
<dbReference type="GO" id="GO:0003091">
    <property type="term" value="P:renal water homeostasis"/>
    <property type="evidence" value="ECO:0007669"/>
    <property type="project" value="Ensembl"/>
</dbReference>
<dbReference type="GO" id="GO:0001523">
    <property type="term" value="P:retinoid metabolic process"/>
    <property type="evidence" value="ECO:0000315"/>
    <property type="project" value="UniProtKB"/>
</dbReference>
<dbReference type="CDD" id="cd19107">
    <property type="entry name" value="AKR_AKR1B1-19"/>
    <property type="match status" value="1"/>
</dbReference>
<dbReference type="FunFam" id="3.20.20.100:FF:000009">
    <property type="entry name" value="Aldo-keto reductase family 1 member B1"/>
    <property type="match status" value="1"/>
</dbReference>
<dbReference type="Gene3D" id="3.20.20.100">
    <property type="entry name" value="NADP-dependent oxidoreductase domain"/>
    <property type="match status" value="1"/>
</dbReference>
<dbReference type="InterPro" id="IPR020471">
    <property type="entry name" value="AKR"/>
</dbReference>
<dbReference type="InterPro" id="IPR018170">
    <property type="entry name" value="Aldo/ket_reductase_CS"/>
</dbReference>
<dbReference type="InterPro" id="IPR023210">
    <property type="entry name" value="NADP_OxRdtase_dom"/>
</dbReference>
<dbReference type="InterPro" id="IPR036812">
    <property type="entry name" value="NADP_OxRdtase_dom_sf"/>
</dbReference>
<dbReference type="PANTHER" id="PTHR11732">
    <property type="entry name" value="ALDO/KETO REDUCTASE"/>
    <property type="match status" value="1"/>
</dbReference>
<dbReference type="Pfam" id="PF00248">
    <property type="entry name" value="Aldo_ket_red"/>
    <property type="match status" value="1"/>
</dbReference>
<dbReference type="PIRSF" id="PIRSF000097">
    <property type="entry name" value="AKR"/>
    <property type="match status" value="1"/>
</dbReference>
<dbReference type="PRINTS" id="PR00069">
    <property type="entry name" value="ALDKETRDTASE"/>
</dbReference>
<dbReference type="SUPFAM" id="SSF51430">
    <property type="entry name" value="NAD(P)-linked oxidoreductase"/>
    <property type="match status" value="1"/>
</dbReference>
<dbReference type="PROSITE" id="PS00798">
    <property type="entry name" value="ALDOKETO_REDUCTASE_1"/>
    <property type="match status" value="1"/>
</dbReference>
<dbReference type="PROSITE" id="PS00062">
    <property type="entry name" value="ALDOKETO_REDUCTASE_2"/>
    <property type="match status" value="1"/>
</dbReference>
<dbReference type="PROSITE" id="PS00063">
    <property type="entry name" value="ALDOKETO_REDUCTASE_3"/>
    <property type="match status" value="1"/>
</dbReference>
<gene>
    <name type="primary">AKR1B1</name>
    <name type="synonym">ALDR1</name>
    <name evidence="20" type="synonym">ALR2</name>
</gene>
<comment type="function">
    <text evidence="4 9 12 13 15 18">Catalyzes the NADPH-dependent reduction of a wide variety of carbonyl-containing compounds to their corresponding alcohols. Displays enzymatic activity towards endogenous metabolites such as aromatic and aliphatic aldehydes, ketones, monosacharides, bile acids and xenobiotics substrates. Key enzyme in the polyol pathway, catalyzes reduction of glucose to sorbitol during hyperglycemia (PubMed:1936586). Reduces steroids and their derivatives and prostaglandins. Displays low enzymatic activity toward all-trans-retinal, 9-cis-retinal, and 13-cis-retinal (PubMed:12732097, PubMed:19010934, PubMed:8343525). Catalyzes the reduction of diverse phospholipid aldehydes such as 1-palmitoyl-2-(5-oxovaleroyl)-sn -glycero-3-phosphoethanolamin (POVPC) and related phospholipid aldehydes that are generated from the oxydation of phosphotidylcholine and phosphatdyleethanolamides (PubMed:17381426). Plays a role in detoxifying dietary and lipid-derived unsaturated carbonyls, such as crotonaldehyde, 4-hydroxynonenal, trans-2-hexenal, trans-2,4-hexadienal and their glutathione-conjugates carbonyls (GS-carbonyls) (PubMed:21329684).</text>
</comment>
<comment type="catalytic activity">
    <reaction evidence="16">
        <text>an alditol + NADP(+) = an aldose + NADPH + H(+)</text>
        <dbReference type="Rhea" id="RHEA:12789"/>
        <dbReference type="Rhea" id="RHEA-COMP:9554"/>
        <dbReference type="Rhea" id="RHEA-COMP:9555"/>
        <dbReference type="ChEBI" id="CHEBI:15378"/>
        <dbReference type="ChEBI" id="CHEBI:15693"/>
        <dbReference type="ChEBI" id="CHEBI:17522"/>
        <dbReference type="ChEBI" id="CHEBI:57783"/>
        <dbReference type="ChEBI" id="CHEBI:58349"/>
        <dbReference type="EC" id="1.1.1.21"/>
    </reaction>
</comment>
<comment type="catalytic activity">
    <reaction evidence="4 14">
        <text>all-trans-retinol + NADP(+) = all-trans-retinal + NADPH + H(+)</text>
        <dbReference type="Rhea" id="RHEA:25033"/>
        <dbReference type="ChEBI" id="CHEBI:15378"/>
        <dbReference type="ChEBI" id="CHEBI:17336"/>
        <dbReference type="ChEBI" id="CHEBI:17898"/>
        <dbReference type="ChEBI" id="CHEBI:57783"/>
        <dbReference type="ChEBI" id="CHEBI:58349"/>
        <dbReference type="EC" id="1.1.1.300"/>
    </reaction>
</comment>
<comment type="catalytic activity">
    <reaction evidence="4 14">
        <text>9-cis-retinol + NADP(+) = 9-cis-retinal + NADPH + H(+)</text>
        <dbReference type="Rhea" id="RHEA:54916"/>
        <dbReference type="ChEBI" id="CHEBI:15378"/>
        <dbReference type="ChEBI" id="CHEBI:57783"/>
        <dbReference type="ChEBI" id="CHEBI:58349"/>
        <dbReference type="ChEBI" id="CHEBI:78272"/>
        <dbReference type="ChEBI" id="CHEBI:78273"/>
    </reaction>
</comment>
<comment type="catalytic activity">
    <reaction evidence="4">
        <text>13-cis-retinol + NADP(+) = 13-cis-retinal + NADPH + H(+)</text>
        <dbReference type="Rhea" id="RHEA:54920"/>
        <dbReference type="ChEBI" id="CHEBI:15378"/>
        <dbReference type="ChEBI" id="CHEBI:45479"/>
        <dbReference type="ChEBI" id="CHEBI:45487"/>
        <dbReference type="ChEBI" id="CHEBI:57783"/>
        <dbReference type="ChEBI" id="CHEBI:58349"/>
    </reaction>
</comment>
<comment type="catalytic activity">
    <reaction evidence="3 4 13 14 16">
        <text>glycerol + NADP(+) = D-glyceraldehyde + NADPH + H(+)</text>
        <dbReference type="Rhea" id="RHEA:23592"/>
        <dbReference type="ChEBI" id="CHEBI:15378"/>
        <dbReference type="ChEBI" id="CHEBI:17378"/>
        <dbReference type="ChEBI" id="CHEBI:17754"/>
        <dbReference type="ChEBI" id="CHEBI:57783"/>
        <dbReference type="ChEBI" id="CHEBI:58349"/>
        <dbReference type="EC" id="1.1.1.372"/>
    </reaction>
</comment>
<comment type="catalytic activity">
    <reaction evidence="3 4 13 14 16">
        <text>glycerol + NADP(+) = L-glyceraldehyde + NADPH + H(+)</text>
        <dbReference type="Rhea" id="RHEA:38111"/>
        <dbReference type="ChEBI" id="CHEBI:15378"/>
        <dbReference type="ChEBI" id="CHEBI:17754"/>
        <dbReference type="ChEBI" id="CHEBI:27975"/>
        <dbReference type="ChEBI" id="CHEBI:57783"/>
        <dbReference type="ChEBI" id="CHEBI:58349"/>
        <dbReference type="EC" id="1.1.1.372"/>
    </reaction>
</comment>
<comment type="catalytic activity">
    <reaction evidence="15">
        <text>prenol + NADP(+) = 3-methyl-2-butenal + NADPH + H(+)</text>
        <dbReference type="Rhea" id="RHEA:58420"/>
        <dbReference type="ChEBI" id="CHEBI:15378"/>
        <dbReference type="ChEBI" id="CHEBI:15825"/>
        <dbReference type="ChEBI" id="CHEBI:16019"/>
        <dbReference type="ChEBI" id="CHEBI:57783"/>
        <dbReference type="ChEBI" id="CHEBI:58349"/>
    </reaction>
</comment>
<comment type="catalytic activity">
    <reaction evidence="15">
        <text>(E)-hex-2-en-1-ol + NADP(+) = (E)-hex-2-enal + NADPH + H(+)</text>
        <dbReference type="Rhea" id="RHEA:58424"/>
        <dbReference type="ChEBI" id="CHEBI:15378"/>
        <dbReference type="ChEBI" id="CHEBI:28913"/>
        <dbReference type="ChEBI" id="CHEBI:57783"/>
        <dbReference type="ChEBI" id="CHEBI:58349"/>
        <dbReference type="ChEBI" id="CHEBI:141205"/>
    </reaction>
</comment>
<comment type="catalytic activity">
    <reaction evidence="15">
        <text>(E,E)-2,4-hexadien-1-ol + NADP(+) = (E,E)-2,4-hexadienal + NADPH + H(+)</text>
        <dbReference type="Rhea" id="RHEA:58428"/>
        <dbReference type="ChEBI" id="CHEBI:15378"/>
        <dbReference type="ChEBI" id="CHEBI:57783"/>
        <dbReference type="ChEBI" id="CHEBI:58349"/>
        <dbReference type="ChEBI" id="CHEBI:82334"/>
        <dbReference type="ChEBI" id="CHEBI:142625"/>
    </reaction>
</comment>
<comment type="catalytic activity">
    <reaction evidence="15">
        <text>a 4-hydroxynonen-1-ol + NADP(+) = a 4-hydroxynonenal + NADPH + H(+)</text>
        <dbReference type="Rhea" id="RHEA:58336"/>
        <dbReference type="ChEBI" id="CHEBI:15378"/>
        <dbReference type="ChEBI" id="CHEBI:57783"/>
        <dbReference type="ChEBI" id="CHEBI:58349"/>
        <dbReference type="ChEBI" id="CHEBI:142593"/>
        <dbReference type="ChEBI" id="CHEBI:142606"/>
    </reaction>
</comment>
<comment type="catalytic activity">
    <reaction evidence="12">
        <text>prostaglandin F2alpha + NADP(+) = prostaglandin H2 + NADPH + H(+)</text>
        <dbReference type="Rhea" id="RHEA:45312"/>
        <dbReference type="ChEBI" id="CHEBI:15378"/>
        <dbReference type="ChEBI" id="CHEBI:57404"/>
        <dbReference type="ChEBI" id="CHEBI:57405"/>
        <dbReference type="ChEBI" id="CHEBI:57783"/>
        <dbReference type="ChEBI" id="CHEBI:58349"/>
    </reaction>
</comment>
<comment type="catalytic activity">
    <reaction evidence="3 15">
        <text>allyl alcohol + NADP(+) = acrolein + NADPH + H(+)</text>
        <dbReference type="Rhea" id="RHEA:12168"/>
        <dbReference type="ChEBI" id="CHEBI:15368"/>
        <dbReference type="ChEBI" id="CHEBI:15378"/>
        <dbReference type="ChEBI" id="CHEBI:16605"/>
        <dbReference type="ChEBI" id="CHEBI:57783"/>
        <dbReference type="ChEBI" id="CHEBI:58349"/>
        <dbReference type="EC" id="1.1.1.54"/>
    </reaction>
</comment>
<comment type="catalytic activity">
    <reaction evidence="4">
        <text>pyridine 3-methanol + NADP(+) = pyridine-3-carbaldehyde + NADPH + H(+)</text>
        <dbReference type="Rhea" id="RHEA:58776"/>
        <dbReference type="ChEBI" id="CHEBI:15378"/>
        <dbReference type="ChEBI" id="CHEBI:28345"/>
        <dbReference type="ChEBI" id="CHEBI:45213"/>
        <dbReference type="ChEBI" id="CHEBI:57783"/>
        <dbReference type="ChEBI" id="CHEBI:58349"/>
    </reaction>
</comment>
<comment type="catalytic activity">
    <reaction evidence="9">
        <text>1-hexadecanoyl-2-(5-oxopentanoyl)-sn-glycero-3-phosphocholine + NADPH + H(+) = 1-hexadecanoyl-2-(5-hydroxypentanoyl)-sn-glycero-3-phosphocholine + NADP(+)</text>
        <dbReference type="Rhea" id="RHEA:58512"/>
        <dbReference type="ChEBI" id="CHEBI:15378"/>
        <dbReference type="ChEBI" id="CHEBI:57783"/>
        <dbReference type="ChEBI" id="CHEBI:58349"/>
        <dbReference type="ChEBI" id="CHEBI:77890"/>
        <dbReference type="ChEBI" id="CHEBI:142747"/>
    </reaction>
</comment>
<comment type="catalytic activity">
    <reaction evidence="9">
        <text>1-hexadecanoyl-2-(7-oxoheptanoyl)-sn-glycero-3-phosphocholine + NADPH + H(+) = 1-hexadecanoyl-2-(7-hydroxyheptanoyl)-sn-glycero-3-phosphocholine + NADP(+)</text>
        <dbReference type="Rhea" id="RHEA:58752"/>
        <dbReference type="ChEBI" id="CHEBI:15378"/>
        <dbReference type="ChEBI" id="CHEBI:57783"/>
        <dbReference type="ChEBI" id="CHEBI:58349"/>
        <dbReference type="ChEBI" id="CHEBI:134601"/>
        <dbReference type="ChEBI" id="CHEBI:142748"/>
    </reaction>
</comment>
<comment type="catalytic activity">
    <reaction evidence="9">
        <text>1-hexadecanoyl-2-(9-oxononanoyl)-sn-glycero-3-phosphocholine + NADPH + H(+) = 1-hexadecanoyl-2-(9-hydroxynonanoyl)-sn-glycero-3-phosphocholine + NADP(+)</text>
        <dbReference type="Rhea" id="RHEA:58592"/>
        <dbReference type="ChEBI" id="CHEBI:15378"/>
        <dbReference type="ChEBI" id="CHEBI:57783"/>
        <dbReference type="ChEBI" id="CHEBI:58349"/>
        <dbReference type="ChEBI" id="CHEBI:61042"/>
        <dbReference type="ChEBI" id="CHEBI:142749"/>
    </reaction>
</comment>
<comment type="catalytic activity">
    <reaction evidence="9">
        <text>1-hexadecanoyl-2-(5-oxopentanoyl)-sn-glycero-3-phosphoethanolamine + NADPH + H(+) = 1-hexadecanoyl-2-(5-hydroxypentanoyl)-sn-glycero-3-phosphoethanolamine + NADP(+)</text>
        <dbReference type="Rhea" id="RHEA:58756"/>
        <dbReference type="ChEBI" id="CHEBI:15378"/>
        <dbReference type="ChEBI" id="CHEBI:57783"/>
        <dbReference type="ChEBI" id="CHEBI:58349"/>
        <dbReference type="ChEBI" id="CHEBI:142750"/>
        <dbReference type="ChEBI" id="CHEBI:142751"/>
    </reaction>
</comment>
<comment type="activity regulation">
    <text evidence="4 18">Cys-299 may regulate the kinetic and inhibition properties of the enzyme, but does not participate in catalysis (PubMed:8343525). Tolrestat inhibits retinal reduction (PubMed:12732097).</text>
</comment>
<comment type="biophysicochemical properties">
    <kinetics>
        <KM evidence="4">44 uM for D,L-glyceraldehyde</KM>
        <KM evidence="4">76000 uM for glucose</KM>
        <KM evidence="4">14 uM for pyridine-3-carbaldehyde</KM>
        <KM evidence="4">10 uM for all-trans-retinal</KM>
        <KM evidence="4">12 uM for 9-cis-retinal</KM>
        <KM evidence="4">14 uM for 13-cis-retinal</KM>
        <KM evidence="9">8.8 uM for 1-O-palmitoyl-2-O-(5-oxovaleryl)-sn-glycero-3-phosphocholine (POVPC)</KM>
        <KM evidence="9">16 uM for 1-hexadecanoyl-2-(7-oxoheptanoyl)-sn-glycero-3-phosphocholine</KM>
        <KM evidence="9">13 uM for 1-hexadecanoyl-2-(9-oxononanoyl)-sn-glycero-3-phosphocholine</KM>
        <KM evidence="9">11 uM for 1-hexadecanoyl-2-(5-oxopentanoyl)-sn-glycero-3-phosphoethanolamine</KM>
        <KM evidence="15">884 uM for acrolein</KM>
        <KM evidence="15">9643 uM for 3-methyl-2-butenal</KM>
        <KM evidence="15">878 uM for (E)-2-hexenal</KM>
        <KM evidence="15">905 uM for (E,E)-2,4-hexadienal</KM>
        <KM evidence="15">716 uM for 4-hydroxynonenal</KM>
        <KM evidence="15">122 uM for GS-(E)-4-hexenal</KM>
        <KM evidence="15">7 uM for GS-hexenal</KM>
        <KM evidence="15">5 uM for GS-4-hydroxynonenal</KM>
        <KM evidence="12">1.9 uM for prostaglandin H2</KM>
        <Vmax evidence="12">26.0 nmol/min/mg enzyme for prostaglandin H2</Vmax>
        <text evidence="4 14 15">kcat is 15 min(-1) for all-trans-retinal as substrate. kcat is 30 min(-1) for 9-cis-retinal as substrate. kcat is 94 min(-1) for 13-cis-retinal as substrate (PubMed:12732097). kcat is 11 min(-1) for acrolein as substrate. kcat is 31 min(-1) for 3-methyl-2-butenal as substrate. kcat is 41 min(-1) for (E)-2-hexenal as substrate. kcat is 43 min(-1) for (E,E)-2,4-hexadienal as substrate. kcat is 50 min(-1) for 4-hydroxynonenal as substrate. kcat is 16 min(-1) for GS-(E)-4-hexenal as substrate. kcat is 16 min(-1) for GS-hexenal as substrate. kcat is 13 min(-1) for GS-4-hydroxynonenal as substrate (PubMed:21329684). kcat is 31 min(-1) for D,L-glyceraldehyde (PubMed:21329680).</text>
    </kinetics>
</comment>
<comment type="subunit">
    <text evidence="5 6 7 8 10 11">Monomer.</text>
</comment>
<comment type="interaction">
    <interactant intactId="EBI-1052491">
        <id>P15121</id>
    </interactant>
    <interactant intactId="EBI-18688654">
        <id>Q9BUY7</id>
        <label>EFCAB11</label>
    </interactant>
    <organismsDiffer>false</organismsDiffer>
    <experiments>3</experiments>
</comment>
<comment type="subcellular location">
    <subcellularLocation>
        <location>Cytoplasm</location>
    </subcellularLocation>
</comment>
<comment type="tissue specificity">
    <text evidence="19">Highly expressed in embryonic epithelial cells (EUE) in response to osmotic stress.</text>
</comment>
<comment type="similarity">
    <text evidence="21">Belongs to the aldo/keto reductase family.</text>
</comment>
<keyword id="KW-0002">3D-structure</keyword>
<keyword id="KW-0007">Acetylation</keyword>
<keyword id="KW-0963">Cytoplasm</keyword>
<keyword id="KW-0903">Direct protein sequencing</keyword>
<keyword id="KW-0443">Lipid metabolism</keyword>
<keyword id="KW-0521">NADP</keyword>
<keyword id="KW-0560">Oxidoreductase</keyword>
<keyword id="KW-0597">Phosphoprotein</keyword>
<keyword id="KW-1267">Proteomics identification</keyword>
<keyword id="KW-1185">Reference proteome</keyword>
<organism>
    <name type="scientific">Homo sapiens</name>
    <name type="common">Human</name>
    <dbReference type="NCBI Taxonomy" id="9606"/>
    <lineage>
        <taxon>Eukaryota</taxon>
        <taxon>Metazoa</taxon>
        <taxon>Chordata</taxon>
        <taxon>Craniata</taxon>
        <taxon>Vertebrata</taxon>
        <taxon>Euteleostomi</taxon>
        <taxon>Mammalia</taxon>
        <taxon>Eutheria</taxon>
        <taxon>Euarchontoglires</taxon>
        <taxon>Primates</taxon>
        <taxon>Haplorrhini</taxon>
        <taxon>Catarrhini</taxon>
        <taxon>Hominidae</taxon>
        <taxon>Homo</taxon>
    </lineage>
</organism>
<evidence type="ECO:0000250" key="1">
    <source>
        <dbReference type="UniProtKB" id="P07943"/>
    </source>
</evidence>
<evidence type="ECO:0000255" key="2"/>
<evidence type="ECO:0000269" key="3">
    <source>
    </source>
</evidence>
<evidence type="ECO:0000269" key="4">
    <source>
    </source>
</evidence>
<evidence type="ECO:0000269" key="5">
    <source>
    </source>
</evidence>
<evidence type="ECO:0000269" key="6">
    <source>
    </source>
</evidence>
<evidence type="ECO:0000269" key="7">
    <source>
    </source>
</evidence>
<evidence type="ECO:0000269" key="8">
    <source>
    </source>
</evidence>
<evidence type="ECO:0000269" key="9">
    <source>
    </source>
</evidence>
<evidence type="ECO:0000269" key="10">
    <source>
    </source>
</evidence>
<evidence type="ECO:0000269" key="11">
    <source>
    </source>
</evidence>
<evidence type="ECO:0000269" key="12">
    <source>
    </source>
</evidence>
<evidence type="ECO:0000269" key="13">
    <source>
    </source>
</evidence>
<evidence type="ECO:0000269" key="14">
    <source>
    </source>
</evidence>
<evidence type="ECO:0000269" key="15">
    <source>
    </source>
</evidence>
<evidence type="ECO:0000269" key="16">
    <source>
    </source>
</evidence>
<evidence type="ECO:0000269" key="17">
    <source>
    </source>
</evidence>
<evidence type="ECO:0000269" key="18">
    <source>
    </source>
</evidence>
<evidence type="ECO:0000269" key="19">
    <source>
    </source>
</evidence>
<evidence type="ECO:0000303" key="20">
    <source>
    </source>
</evidence>
<evidence type="ECO:0000305" key="21"/>
<evidence type="ECO:0007744" key="22">
    <source>
    </source>
</evidence>
<evidence type="ECO:0007744" key="23">
    <source>
    </source>
</evidence>
<evidence type="ECO:0007829" key="24">
    <source>
        <dbReference type="PDB" id="1IEI"/>
    </source>
</evidence>
<evidence type="ECO:0007829" key="25">
    <source>
        <dbReference type="PDB" id="1US0"/>
    </source>
</evidence>
<evidence type="ECO:0007829" key="26">
    <source>
        <dbReference type="PDB" id="1XGD"/>
    </source>
</evidence>
<evidence type="ECO:0007829" key="27">
    <source>
        <dbReference type="PDB" id="2ACQ"/>
    </source>
</evidence>
<evidence type="ECO:0007829" key="28">
    <source>
        <dbReference type="PDB" id="2PDC"/>
    </source>
</evidence>
<evidence type="ECO:0007829" key="29">
    <source>
        <dbReference type="PDB" id="3U2C"/>
    </source>
</evidence>
<accession>P15121</accession>
<accession>B2R8N3</accession>
<accession>Q5U031</accession>
<accession>Q6FGA4</accession>
<accession>Q6ICP2</accession>
<accession>Q9BS21</accession>
<accession>Q9UCI9</accession>
<reference key="1">
    <citation type="journal article" date="1989" name="J. Biol. Chem.">
        <title>The aldo-keto reductase superfamily. cDNAs and deduced amino acid sequences of human aldehyde and aldose reductases.</title>
        <authorList>
            <person name="Bohren K.M."/>
            <person name="Bullock B."/>
            <person name="Wermuth B."/>
            <person name="Gabbay K.H."/>
        </authorList>
    </citation>
    <scope>NUCLEOTIDE SEQUENCE [MRNA]</scope>
    <scope>PARTIAL PROTEIN SEQUENCE</scope>
</reference>
<reference key="2">
    <citation type="journal article" date="1989" name="J. Biol. Chem.">
        <title>Cloning and sequence determination of human placental aldose reductase gene.</title>
        <authorList>
            <person name="Chung S."/>
            <person name="Lamendola J."/>
        </authorList>
    </citation>
    <scope>NUCLEOTIDE SEQUENCE [MRNA]</scope>
    <source>
        <tissue>Placenta</tissue>
    </source>
</reference>
<reference key="3">
    <citation type="journal article" date="1989" name="Nucleic Acids Res.">
        <title>Nucleotide sequence of cDNA for human aldose reductase.</title>
        <authorList>
            <person name="Graham A."/>
            <person name="Hedge P.J."/>
            <person name="Powell S.J."/>
            <person name="Riley J."/>
            <person name="Brown L."/>
            <person name="Gammack A."/>
            <person name="Carey F."/>
            <person name="Markham A.F."/>
        </authorList>
    </citation>
    <scope>NUCLEOTIDE SEQUENCE [MRNA]</scope>
    <source>
        <tissue>Fetus</tissue>
    </source>
</reference>
<reference key="4">
    <citation type="journal article" date="1990" name="DNA Cell Biol.">
        <title>Cloning and prokaryotic expression of a biologically active human placental aldose reductase.</title>
        <authorList>
            <person name="Grundmann U."/>
            <person name="Bohn H."/>
            <person name="Obermeier R."/>
            <person name="Amann E."/>
        </authorList>
    </citation>
    <scope>NUCLEOTIDE SEQUENCE [GENOMIC DNA / MRNA]</scope>
    <source>
        <tissue>Placenta</tissue>
    </source>
</reference>
<reference key="5">
    <citation type="journal article" date="1990" name="J. Biol. Chem.">
        <title>Cloning and expression of human aldose reductase.</title>
        <authorList>
            <person name="Nishimura C."/>
            <person name="Matsuura Y."/>
            <person name="Kokai Y."/>
            <person name="Akera T."/>
            <person name="Carper D."/>
            <person name="Morjana N."/>
            <person name="Lyons C."/>
            <person name="Flynn T.G."/>
        </authorList>
    </citation>
    <scope>NUCLEOTIDE SEQUENCE [MRNA]</scope>
</reference>
<reference key="6">
    <citation type="journal article" date="1991" name="J. Biol. Chem.">
        <title>Structure of the human aldose reductase gene.</title>
        <authorList>
            <person name="Graham A."/>
            <person name="Brown L."/>
            <person name="Hedge P.J."/>
            <person name="Gammack A.J."/>
            <person name="Markham A.F."/>
        </authorList>
    </citation>
    <scope>NUCLEOTIDE SEQUENCE [GENOMIC DNA]</scope>
</reference>
<reference key="7">
    <citation type="journal article" date="1997" name="J. Biol. Chem.">
        <title>Identification and characterization of multiple osmotic response sequences in the human aldose reductase gene.</title>
        <authorList>
            <person name="Ko B.C.B."/>
            <person name="Ruepp B."/>
            <person name="Bohren K.M."/>
            <person name="Gabbay K.H."/>
            <person name="Chung S.S."/>
        </authorList>
    </citation>
    <scope>NUCLEOTIDE SEQUENCE [GENOMIC DNA]</scope>
</reference>
<reference key="8">
    <citation type="journal article" date="2004" name="Br. J. Dermatol.">
        <title>SEREX identification of new tumour-associated antigens in cutaneous T-cell lymphoma.</title>
        <authorList>
            <person name="Hartmann T.B."/>
            <person name="Thiel D."/>
            <person name="Dummer R."/>
            <person name="Schadendorf D."/>
            <person name="Eichmueller S."/>
        </authorList>
    </citation>
    <scope>NUCLEOTIDE SEQUENCE [MRNA]</scope>
    <source>
        <tissue>Lymphoma</tissue>
    </source>
</reference>
<reference key="9">
    <citation type="journal article" date="2004" name="Nat. Genet.">
        <title>Complete sequencing and characterization of 21,243 full-length human cDNAs.</title>
        <authorList>
            <person name="Ota T."/>
            <person name="Suzuki Y."/>
            <person name="Nishikawa T."/>
            <person name="Otsuki T."/>
            <person name="Sugiyama T."/>
            <person name="Irie R."/>
            <person name="Wakamatsu A."/>
            <person name="Hayashi K."/>
            <person name="Sato H."/>
            <person name="Nagai K."/>
            <person name="Kimura K."/>
            <person name="Makita H."/>
            <person name="Sekine M."/>
            <person name="Obayashi M."/>
            <person name="Nishi T."/>
            <person name="Shibahara T."/>
            <person name="Tanaka T."/>
            <person name="Ishii S."/>
            <person name="Yamamoto J."/>
            <person name="Saito K."/>
            <person name="Kawai Y."/>
            <person name="Isono Y."/>
            <person name="Nakamura Y."/>
            <person name="Nagahari K."/>
            <person name="Murakami K."/>
            <person name="Yasuda T."/>
            <person name="Iwayanagi T."/>
            <person name="Wagatsuma M."/>
            <person name="Shiratori A."/>
            <person name="Sudo H."/>
            <person name="Hosoiri T."/>
            <person name="Kaku Y."/>
            <person name="Kodaira H."/>
            <person name="Kondo H."/>
            <person name="Sugawara M."/>
            <person name="Takahashi M."/>
            <person name="Kanda K."/>
            <person name="Yokoi T."/>
            <person name="Furuya T."/>
            <person name="Kikkawa E."/>
            <person name="Omura Y."/>
            <person name="Abe K."/>
            <person name="Kamihara K."/>
            <person name="Katsuta N."/>
            <person name="Sato K."/>
            <person name="Tanikawa M."/>
            <person name="Yamazaki M."/>
            <person name="Ninomiya K."/>
            <person name="Ishibashi T."/>
            <person name="Yamashita H."/>
            <person name="Murakawa K."/>
            <person name="Fujimori K."/>
            <person name="Tanai H."/>
            <person name="Kimata M."/>
            <person name="Watanabe M."/>
            <person name="Hiraoka S."/>
            <person name="Chiba Y."/>
            <person name="Ishida S."/>
            <person name="Ono Y."/>
            <person name="Takiguchi S."/>
            <person name="Watanabe S."/>
            <person name="Yosida M."/>
            <person name="Hotuta T."/>
            <person name="Kusano J."/>
            <person name="Kanehori K."/>
            <person name="Takahashi-Fujii A."/>
            <person name="Hara H."/>
            <person name="Tanase T.-O."/>
            <person name="Nomura Y."/>
            <person name="Togiya S."/>
            <person name="Komai F."/>
            <person name="Hara R."/>
            <person name="Takeuchi K."/>
            <person name="Arita M."/>
            <person name="Imose N."/>
            <person name="Musashino K."/>
            <person name="Yuuki H."/>
            <person name="Oshima A."/>
            <person name="Sasaki N."/>
            <person name="Aotsuka S."/>
            <person name="Yoshikawa Y."/>
            <person name="Matsunawa H."/>
            <person name="Ichihara T."/>
            <person name="Shiohata N."/>
            <person name="Sano S."/>
            <person name="Moriya S."/>
            <person name="Momiyama H."/>
            <person name="Satoh N."/>
            <person name="Takami S."/>
            <person name="Terashima Y."/>
            <person name="Suzuki O."/>
            <person name="Nakagawa S."/>
            <person name="Senoh A."/>
            <person name="Mizoguchi H."/>
            <person name="Goto Y."/>
            <person name="Shimizu F."/>
            <person name="Wakebe H."/>
            <person name="Hishigaki H."/>
            <person name="Watanabe T."/>
            <person name="Sugiyama A."/>
            <person name="Takemoto M."/>
            <person name="Kawakami B."/>
            <person name="Yamazaki M."/>
            <person name="Watanabe K."/>
            <person name="Kumagai A."/>
            <person name="Itakura S."/>
            <person name="Fukuzumi Y."/>
            <person name="Fujimori Y."/>
            <person name="Komiyama M."/>
            <person name="Tashiro H."/>
            <person name="Tanigami A."/>
            <person name="Fujiwara T."/>
            <person name="Ono T."/>
            <person name="Yamada K."/>
            <person name="Fujii Y."/>
            <person name="Ozaki K."/>
            <person name="Hirao M."/>
            <person name="Ohmori Y."/>
            <person name="Kawabata A."/>
            <person name="Hikiji T."/>
            <person name="Kobatake N."/>
            <person name="Inagaki H."/>
            <person name="Ikema Y."/>
            <person name="Okamoto S."/>
            <person name="Okitani R."/>
            <person name="Kawakami T."/>
            <person name="Noguchi S."/>
            <person name="Itoh T."/>
            <person name="Shigeta K."/>
            <person name="Senba T."/>
            <person name="Matsumura K."/>
            <person name="Nakajima Y."/>
            <person name="Mizuno T."/>
            <person name="Morinaga M."/>
            <person name="Sasaki M."/>
            <person name="Togashi T."/>
            <person name="Oyama M."/>
            <person name="Hata H."/>
            <person name="Watanabe M."/>
            <person name="Komatsu T."/>
            <person name="Mizushima-Sugano J."/>
            <person name="Satoh T."/>
            <person name="Shirai Y."/>
            <person name="Takahashi Y."/>
            <person name="Nakagawa K."/>
            <person name="Okumura K."/>
            <person name="Nagase T."/>
            <person name="Nomura N."/>
            <person name="Kikuchi H."/>
            <person name="Masuho Y."/>
            <person name="Yamashita R."/>
            <person name="Nakai K."/>
            <person name="Yada T."/>
            <person name="Nakamura Y."/>
            <person name="Ohara O."/>
            <person name="Isogai T."/>
            <person name="Sugano S."/>
        </authorList>
    </citation>
    <scope>NUCLEOTIDE SEQUENCE [LARGE SCALE MRNA]</scope>
    <source>
        <tissue>Brain cortex</tissue>
    </source>
</reference>
<reference key="10">
    <citation type="submission" date="2004-06" db="EMBL/GenBank/DDBJ databases">
        <title>Cloning of human full open reading frames in Gateway(TM) system entry vector (pDONR201).</title>
        <authorList>
            <person name="Ebert L."/>
            <person name="Schick M."/>
            <person name="Neubert P."/>
            <person name="Schatten R."/>
            <person name="Henze S."/>
            <person name="Korn B."/>
        </authorList>
    </citation>
    <scope>NUCLEOTIDE SEQUENCE [LARGE SCALE MRNA]</scope>
</reference>
<reference key="11">
    <citation type="submission" date="2004-10" db="EMBL/GenBank/DDBJ databases">
        <title>Cloning of human full-length CDSs in BD Creator(TM) system donor vector.</title>
        <authorList>
            <person name="Kalnine N."/>
            <person name="Chen X."/>
            <person name="Rolfs A."/>
            <person name="Halleck A."/>
            <person name="Hines L."/>
            <person name="Eisenstein S."/>
            <person name="Koundinya M."/>
            <person name="Raphael J."/>
            <person name="Moreira D."/>
            <person name="Kelley T."/>
            <person name="LaBaer J."/>
            <person name="Lin Y."/>
            <person name="Phelan M."/>
            <person name="Farmer A."/>
        </authorList>
    </citation>
    <scope>NUCLEOTIDE SEQUENCE [LARGE SCALE MRNA]</scope>
</reference>
<reference key="12">
    <citation type="journal article" date="2003" name="Science">
        <title>Human chromosome 7: DNA sequence and biology.</title>
        <authorList>
            <person name="Scherer S.W."/>
            <person name="Cheung J."/>
            <person name="MacDonald J.R."/>
            <person name="Osborne L.R."/>
            <person name="Nakabayashi K."/>
            <person name="Herbrick J.-A."/>
            <person name="Carson A.R."/>
            <person name="Parker-Katiraee L."/>
            <person name="Skaug J."/>
            <person name="Khaja R."/>
            <person name="Zhang J."/>
            <person name="Hudek A.K."/>
            <person name="Li M."/>
            <person name="Haddad M."/>
            <person name="Duggan G.E."/>
            <person name="Fernandez B.A."/>
            <person name="Kanematsu E."/>
            <person name="Gentles S."/>
            <person name="Christopoulos C.C."/>
            <person name="Choufani S."/>
            <person name="Kwasnicka D."/>
            <person name="Zheng X.H."/>
            <person name="Lai Z."/>
            <person name="Nusskern D.R."/>
            <person name="Zhang Q."/>
            <person name="Gu Z."/>
            <person name="Lu F."/>
            <person name="Zeesman S."/>
            <person name="Nowaczyk M.J."/>
            <person name="Teshima I."/>
            <person name="Chitayat D."/>
            <person name="Shuman C."/>
            <person name="Weksberg R."/>
            <person name="Zackai E.H."/>
            <person name="Grebe T.A."/>
            <person name="Cox S.R."/>
            <person name="Kirkpatrick S.J."/>
            <person name="Rahman N."/>
            <person name="Friedman J.M."/>
            <person name="Heng H.H.Q."/>
            <person name="Pelicci P.G."/>
            <person name="Lo-Coco F."/>
            <person name="Belloni E."/>
            <person name="Shaffer L.G."/>
            <person name="Pober B."/>
            <person name="Morton C.C."/>
            <person name="Gusella J.F."/>
            <person name="Bruns G.A.P."/>
            <person name="Korf B.R."/>
            <person name="Quade B.J."/>
            <person name="Ligon A.H."/>
            <person name="Ferguson H."/>
            <person name="Higgins A.W."/>
            <person name="Leach N.T."/>
            <person name="Herrick S.R."/>
            <person name="Lemyre E."/>
            <person name="Farra C.G."/>
            <person name="Kim H.-G."/>
            <person name="Summers A.M."/>
            <person name="Gripp K.W."/>
            <person name="Roberts W."/>
            <person name="Szatmari P."/>
            <person name="Winsor E.J.T."/>
            <person name="Grzeschik K.-H."/>
            <person name="Teebi A."/>
            <person name="Minassian B.A."/>
            <person name="Kere J."/>
            <person name="Armengol L."/>
            <person name="Pujana M.A."/>
            <person name="Estivill X."/>
            <person name="Wilson M.D."/>
            <person name="Koop B.F."/>
            <person name="Tosi S."/>
            <person name="Moore G.E."/>
            <person name="Boright A.P."/>
            <person name="Zlotorynski E."/>
            <person name="Kerem B."/>
            <person name="Kroisel P.M."/>
            <person name="Petek E."/>
            <person name="Oscier D.G."/>
            <person name="Mould S.J."/>
            <person name="Doehner H."/>
            <person name="Doehner K."/>
            <person name="Rommens J.M."/>
            <person name="Vincent J.B."/>
            <person name="Venter J.C."/>
            <person name="Li P.W."/>
            <person name="Mural R.J."/>
            <person name="Adams M.D."/>
            <person name="Tsui L.-C."/>
        </authorList>
    </citation>
    <scope>NUCLEOTIDE SEQUENCE [LARGE SCALE GENOMIC DNA]</scope>
</reference>
<reference key="13">
    <citation type="submission" date="2005-07" db="EMBL/GenBank/DDBJ databases">
        <authorList>
            <person name="Mural R.J."/>
            <person name="Istrail S."/>
            <person name="Sutton G.G."/>
            <person name="Florea L."/>
            <person name="Halpern A.L."/>
            <person name="Mobarry C.M."/>
            <person name="Lippert R."/>
            <person name="Walenz B."/>
            <person name="Shatkay H."/>
            <person name="Dew I."/>
            <person name="Miller J.R."/>
            <person name="Flanigan M.J."/>
            <person name="Edwards N.J."/>
            <person name="Bolanos R."/>
            <person name="Fasulo D."/>
            <person name="Halldorsson B.V."/>
            <person name="Hannenhalli S."/>
            <person name="Turner R."/>
            <person name="Yooseph S."/>
            <person name="Lu F."/>
            <person name="Nusskern D.R."/>
            <person name="Shue B.C."/>
            <person name="Zheng X.H."/>
            <person name="Zhong F."/>
            <person name="Delcher A.L."/>
            <person name="Huson D.H."/>
            <person name="Kravitz S.A."/>
            <person name="Mouchard L."/>
            <person name="Reinert K."/>
            <person name="Remington K.A."/>
            <person name="Clark A.G."/>
            <person name="Waterman M.S."/>
            <person name="Eichler E.E."/>
            <person name="Adams M.D."/>
            <person name="Hunkapiller M.W."/>
            <person name="Myers E.W."/>
            <person name="Venter J.C."/>
        </authorList>
    </citation>
    <scope>NUCLEOTIDE SEQUENCE [LARGE SCALE GENOMIC DNA]</scope>
</reference>
<reference key="14">
    <citation type="journal article" date="2004" name="Genome Res.">
        <title>The status, quality, and expansion of the NIH full-length cDNA project: the Mammalian Gene Collection (MGC).</title>
        <authorList>
            <consortium name="The MGC Project Team"/>
        </authorList>
    </citation>
    <scope>NUCLEOTIDE SEQUENCE [LARGE SCALE MRNA]</scope>
    <source>
        <tissue>Brain</tissue>
        <tissue>Eye</tissue>
        <tissue>Urinary bladder</tissue>
    </source>
</reference>
<reference key="15">
    <citation type="journal article" date="1993" name="Biochim. Biophys. Acta">
        <title>Aldose reductase is involved in long-term adaptation of EUE cells to hyperosmotic stress.</title>
        <authorList>
            <person name="Ferraretto A."/>
            <person name="Negri A."/>
            <person name="Giuliani A."/>
            <person name="De Grada L."/>
            <person name="Fuhrman Conti A.M."/>
            <person name="Ronchi S."/>
        </authorList>
    </citation>
    <scope>PROTEIN SEQUENCE OF 131-162</scope>
    <scope>TISSUE SPECIFICITY</scope>
</reference>
<reference key="16">
    <citation type="journal article" date="1989" name="J. Biol. Chem.">
        <title>Aldose reductase from human psoas muscle. Affinity labeling of an active site lysine by pyridoxal 5'-phosphate and pyridoxal 5'-diphospho-5'-adenosine.</title>
        <authorList>
            <person name="Morjana N.A."/>
            <person name="Lyons C."/>
            <person name="Flynn T.G."/>
        </authorList>
    </citation>
    <scope>PROTEIN SEQUENCE OF 244-275</scope>
</reference>
<reference key="17">
    <citation type="submission" date="2007-03" db="UniProtKB">
        <authorList>
            <person name="Lubec G."/>
            <person name="Vishwanath V."/>
        </authorList>
    </citation>
    <scope>PROTEIN SEQUENCE OF 276-294</scope>
    <scope>IDENTIFICATION BY MASS SPECTROMETRY</scope>
    <source>
        <tissue>Brain</tissue>
        <tissue>Cajal-Retzius cell</tissue>
    </source>
</reference>
<reference key="18">
    <citation type="journal article" date="1993" name="Biochim. Biophys. Acta">
        <title>Identification of the reactive cysteine residue in human placenta aldose reductase.</title>
        <authorList>
            <person name="Liu S.Q."/>
            <person name="Bhatnagar A."/>
            <person name="Ansari N.H."/>
            <person name="Srivastava S.K."/>
        </authorList>
    </citation>
    <scope>PROTEIN SEQUENCE OF 298-316</scope>
    <scope>ACTIVITY REGULATION</scope>
</reference>
<reference key="19">
    <citation type="journal article" date="1993" name="Eur. J. Biochem.">
        <title>Sequence of pig lens aldose reductase and electrospray mass spectrometry of non-covalent and covalent complexes.</title>
        <authorList>
            <person name="Jaquinod M."/>
            <person name="Potier N."/>
            <person name="Klarskov K."/>
            <person name="Reymann J.-M."/>
            <person name="Sorokine O."/>
            <person name="Kieffer S."/>
            <person name="Barth P."/>
            <person name="Andriantomanga V."/>
            <person name="Biellmann J.-F."/>
            <person name="van Dorsselaer A."/>
        </authorList>
    </citation>
    <scope>PARTIAL PROTEIN SEQUENCE</scope>
    <scope>ACETYLATION AT ALA-2</scope>
    <source>
        <tissue>Muscle</tissue>
    </source>
</reference>
<reference key="20">
    <citation type="journal article" date="1991" name="Diabetes">
        <title>Crucial role of aldose reductase activity and plasma glucose level in sorbitol accumulation in erythrocytes from diabetic patients.</title>
        <authorList>
            <person name="Hamada Y."/>
            <person name="Kitoh R."/>
            <person name="Raskin P."/>
        </authorList>
    </citation>
    <scope>CATALYTIC ACTIVITY</scope>
</reference>
<reference key="21">
    <citation type="journal article" date="1993" name="J. Biol. Chem.">
        <title>Probing the active site of human aldose reductase. Site-directed mutagenesis of Asp-43, Tyr-48, Lys-77, and His-110.</title>
        <authorList>
            <person name="Tarle I."/>
            <person name="Borhani D.W."/>
            <person name="Wilson D.K."/>
            <person name="Quiocho F.A."/>
            <person name="Petrash J.M."/>
        </authorList>
    </citation>
    <scope>MUTAGENESIS OF ASP-44; TYR-49; LYS-78 AND HIS-111</scope>
    <scope>CATALYTIC ACTIVITY</scope>
</reference>
<reference key="22">
    <citation type="journal article" date="1999" name="Biochem. J.">
        <title>Major differences exist in the function and tissue-specific expression of human aflatoxin B1 aldehyde reductase and the principal human aldo-keto reductase AKR1 family members.</title>
        <authorList>
            <person name="O'Connor T."/>
            <person name="Ireland L.S."/>
            <person name="Harrison D.J."/>
            <person name="Hayes J.D."/>
        </authorList>
    </citation>
    <scope>FUNCTION</scope>
    <scope>CATALYTIC ACTIVITY</scope>
    <scope>SUBSTRATE SPECIFICITY</scope>
</reference>
<reference key="23">
    <citation type="journal article" date="2003" name="Biochem. J.">
        <title>Human aldose reductase and human small intestine aldose reductase are efficient retinal reductases: consequences for retinoid metabolism.</title>
        <authorList>
            <person name="Crosas B."/>
            <person name="Hyndman D.J."/>
            <person name="Gallego O."/>
            <person name="Martras S."/>
            <person name="Pares X."/>
            <person name="Flynn T.G."/>
            <person name="Farres J."/>
        </authorList>
    </citation>
    <scope>CATALYTIC ACTIVITY</scope>
    <scope>BIOPHYSICOCHEMICAL PROPERTIES</scope>
    <scope>SUBSTRATE SPECIFICITY</scope>
    <scope>ACTIVITY REGULATION</scope>
    <scope>FUNCTION</scope>
</reference>
<reference key="24">
    <citation type="journal article" date="2007" name="Biochem. J.">
        <title>Substrate specificity and catalytic efficiency of aldo-keto reductases with phospholipid aldehydes.</title>
        <authorList>
            <person name="Spite M."/>
            <person name="Baba S.P."/>
            <person name="Ahmed Y."/>
            <person name="Barski O.A."/>
            <person name="Nijhawan K."/>
            <person name="Petrash J.M."/>
            <person name="Bhatnagar A."/>
            <person name="Srivastava S."/>
        </authorList>
    </citation>
    <scope>CATALYTIC ACTIVITY</scope>
    <scope>BIOPHYSICOCHEMICAL PROPERTIES</scope>
    <scope>SUBSTRATE SPECIFICITY</scope>
    <scope>FUNCTION</scope>
</reference>
<reference key="25">
    <citation type="journal article" date="2009" name="J. Biochem.">
        <title>Prostaglandin F2alpha synthase activities of aldo-keto reductase 1B1, 1B3 and 1B7.</title>
        <authorList>
            <person name="Kabututu Z."/>
            <person name="Manin M."/>
            <person name="Pointud J.C."/>
            <person name="Maruyama T."/>
            <person name="Nagata N."/>
            <person name="Lambert S."/>
            <person name="Lefrancois-Martinez A.M."/>
            <person name="Martinez A."/>
            <person name="Urade Y."/>
        </authorList>
    </citation>
    <scope>CATALYTIC ACTIVITY</scope>
    <scope>BIOPHYSICOCHEMICAL PROPERTIES</scope>
    <scope>FUNCTION</scope>
    <scope>SUBSTRATE SPECIFICITY</scope>
</reference>
<reference key="26">
    <citation type="journal article" date="2011" name="Chem. Biol. Interact.">
        <title>Human aldo-keto reductases 1B1 and 1B10: a comparative study on their enzyme activity toward electrophilic carbonyl compounds.</title>
        <authorList>
            <person name="Shen Y."/>
            <person name="Zhong L."/>
            <person name="Johnson S."/>
            <person name="Cao D."/>
        </authorList>
    </citation>
    <scope>CATALYTIC ACTIVITY</scope>
    <scope>BIOPHYSICOCHEMICAL PROPERTIES</scope>
    <scope>SUBSTRATE SPECIFICITY</scope>
    <scope>FUNCTION</scope>
</reference>
<reference key="27">
    <citation type="journal article" date="2011" name="Chem. Biol. Interact.">
        <title>Human and rodent aldo-keto reductases from the AKR1B subfamily and their specificity with retinaldehyde.</title>
        <authorList>
            <person name="Ruiz F.X."/>
            <person name="Moro A."/>
            <person name="Gallego O."/>
            <person name="Ardevol A."/>
            <person name="Rovira C."/>
            <person name="Petrash J.M."/>
            <person name="Pares X."/>
            <person name="Farres J."/>
        </authorList>
    </citation>
    <scope>CATALYTIC ACTIVITY</scope>
    <scope>BIOPHYSICOCHEMICAL PROPERTIES</scope>
    <scope>SUBSTRATE SPECIFICITY</scope>
    <scope>FUNCTION</scope>
</reference>
<reference key="28">
    <citation type="journal article" date="2009" name="Anal. Chem.">
        <title>Lys-N and trypsin cover complementary parts of the phosphoproteome in a refined SCX-based approach.</title>
        <authorList>
            <person name="Gauci S."/>
            <person name="Helbig A.O."/>
            <person name="Slijper M."/>
            <person name="Krijgsveld J."/>
            <person name="Heck A.J."/>
            <person name="Mohammed S."/>
        </authorList>
    </citation>
    <scope>ACETYLATION [LARGE SCALE ANALYSIS] AT ALA-2</scope>
    <scope>CLEAVAGE OF INITIATOR METHIONINE [LARGE SCALE ANALYSIS]</scope>
    <scope>IDENTIFICATION BY MASS SPECTROMETRY [LARGE SCALE ANALYSIS]</scope>
</reference>
<reference key="29">
    <citation type="journal article" date="2009" name="Science">
        <title>Lysine acetylation targets protein complexes and co-regulates major cellular functions.</title>
        <authorList>
            <person name="Choudhary C."/>
            <person name="Kumar C."/>
            <person name="Gnad F."/>
            <person name="Nielsen M.L."/>
            <person name="Rehman M."/>
            <person name="Walther T.C."/>
            <person name="Olsen J.V."/>
            <person name="Mann M."/>
        </authorList>
    </citation>
    <scope>ACETYLATION [LARGE SCALE ANALYSIS] AT LYS-95; LYS-222 AND LYS-263</scope>
    <scope>IDENTIFICATION BY MASS SPECTROMETRY [LARGE SCALE ANALYSIS]</scope>
</reference>
<reference key="30">
    <citation type="journal article" date="2011" name="BMC Syst. Biol.">
        <title>Initial characterization of the human central proteome.</title>
        <authorList>
            <person name="Burkard T.R."/>
            <person name="Planyavsky M."/>
            <person name="Kaupe I."/>
            <person name="Breitwieser F.P."/>
            <person name="Buerckstuemmer T."/>
            <person name="Bennett K.L."/>
            <person name="Superti-Furga G."/>
            <person name="Colinge J."/>
        </authorList>
    </citation>
    <scope>IDENTIFICATION BY MASS SPECTROMETRY [LARGE SCALE ANALYSIS]</scope>
</reference>
<reference key="31">
    <citation type="journal article" date="1992" name="Science">
        <title>An unlikely sugar substrate site in the 1.65 A structure of the human aldose reductase holoenzyme implicated in diabetic complications.</title>
        <authorList>
            <person name="Wilson D.K."/>
            <person name="Bohren K.M."/>
            <person name="Gabbay K.H."/>
            <person name="Quiocho F.A."/>
        </authorList>
    </citation>
    <scope>X-RAY CRYSTALLOGRAPHY (1.65 ANGSTROMS)</scope>
</reference>
<reference key="32">
    <citation type="journal article" date="1992" name="J. Biol. Chem.">
        <title>The crystal structure of the aldose reductase.NADPH binary complex.</title>
        <authorList>
            <person name="Borhani D.W."/>
            <person name="Harter T.M."/>
            <person name="Pertrash J.M."/>
        </authorList>
    </citation>
    <scope>X-RAY CRYSTALLOGRAPHY (2.27 ANGSTROMS)</scope>
</reference>
<reference key="33">
    <citation type="journal article" date="1993" name="Proc. Natl. Acad. Sci. U.S.A.">
        <title>Refined 1.8-A structure of human aldose reductase complexed with the potent inhibitor zopolrestat.</title>
        <authorList>
            <person name="Wilson D.K."/>
            <person name="Tarle I."/>
            <person name="Petrash J.M."/>
            <person name="Quiocho F.A."/>
        </authorList>
    </citation>
    <scope>X-RAY CRYSTALLOGRAPHY (1.8 ANGSTROMS)</scope>
</reference>
<reference key="34">
    <citation type="journal article" date="1997" name="Biochemistry">
        <title>The alrestatin double-decker: binding of two inhibitor molecules to human aldose reductase reveals a new specificity determinant.</title>
        <authorList>
            <person name="Harrison D.H."/>
            <person name="Bohren K.M."/>
            <person name="Petsko G.A."/>
            <person name="Ringe D."/>
            <person name="Gabbay K.H."/>
        </authorList>
    </citation>
    <scope>X-RAY CRYSTALLOGRAPHY (1.8 ANGSTROMS)</scope>
</reference>
<reference key="35">
    <citation type="journal article" date="2004" name="Acta Crystallogr. D">
        <title>The crystallographic structure of the aldose reductase-IDD552 complex shows direct proton donation from tyrosine 48.</title>
        <authorList>
            <person name="Ruiz F."/>
            <person name="Hazemann I."/>
            <person name="Mitschler A."/>
            <person name="Joachimiak A."/>
            <person name="Schneider T."/>
            <person name="Karplus M."/>
            <person name="Podjarny A."/>
        </authorList>
    </citation>
    <scope>X-RAY CRYSTALLOGRAPHY (1.0 ANGSTROMS) IN COMPLEX WITH NADP AND SYNTHETIC INHIBITOR</scope>
    <scope>ACTIVE SITE</scope>
</reference>
<reference key="36">
    <citation type="journal article" date="2004" name="Proteins">
        <title>Ultrahigh resolution drug design I: details of interactions in human aldose reductase-inhibitor complex at 0.66 A.</title>
        <authorList>
            <person name="Howard E.I."/>
            <person name="Sanishvili R."/>
            <person name="Cachau R.E."/>
            <person name="Mitschler A."/>
            <person name="Chevrier B."/>
            <person name="Barth P."/>
            <person name="Lamour V."/>
            <person name="Van Zandt M."/>
            <person name="Sibley E."/>
            <person name="Bon C."/>
            <person name="Moras D."/>
            <person name="Schneider T.R."/>
            <person name="Joachimiak A."/>
            <person name="Podjarny A."/>
        </authorList>
    </citation>
    <scope>X-RAY CRYSTALLOGRAPHY (0.66 ANGSTROMS) IN COMPLEX WITH NADP AND SYNTHETIC INHIBITOR</scope>
</reference>
<reference key="37">
    <citation type="journal article" date="2006" name="J. Mol. Biol.">
        <title>High-resolution crystal structure of aldose reductase complexed with the novel sulfonyl-pyridazinone inhibitor exhibiting an alternative active site anchoring group.</title>
        <authorList>
            <person name="Steuber H."/>
            <person name="Zentgraf M."/>
            <person name="Podjarny A."/>
            <person name="Heine A."/>
            <person name="Klebe G."/>
        </authorList>
    </citation>
    <scope>X-RAY CRYSTALLOGRAPHY (0.95 ANGSTROMS) IN COMPLEX WITH NADP AND SUBSTRATE ANALOG</scope>
</reference>
<reference key="38">
    <citation type="journal article" date="2007" name="Acta Crystallogr. D">
        <title>The atomic resolution structure of human aldose reductase reveals that rearrangement of a bound ligand allows the opening of the safety-belt loop.</title>
        <authorList>
            <person name="Biadene M."/>
            <person name="Hazemann I."/>
            <person name="Cousido A."/>
            <person name="Ginell S."/>
            <person name="Joachimiak A."/>
            <person name="Sheldrick G.M."/>
            <person name="Podjarny A."/>
            <person name="Schneider T.R."/>
        </authorList>
    </citation>
    <scope>X-RAY CRYSTALLOGRAPHY (0.82 ANGSTROMS) IN COMPLEX WITH NADP</scope>
</reference>
<reference key="39">
    <citation type="journal article" date="2007" name="J. Mol. Biol.">
        <title>Evidence for a novel binding site conformer of aldose reductase in ligand-bound state.</title>
        <authorList>
            <person name="Steuber H."/>
            <person name="Zentgraf M."/>
            <person name="La Motta C."/>
            <person name="Sartini S."/>
            <person name="Heine A."/>
            <person name="Klebe G."/>
        </authorList>
    </citation>
    <scope>X-RAY CRYSTALLOGRAPHY (1.55 ANGSTROMS) IN COMPLEX WITH NADP AND SYNTHETIC INHIBITOR</scope>
</reference>
<reference key="40">
    <citation type="journal article" date="2007" name="J. Mol. Biol.">
        <title>Structural and thermodynamic study on aldose reductase: nitro-substituted inhibitors with strong enthalpic binding contribution.</title>
        <authorList>
            <person name="Steuber H."/>
            <person name="Heine A."/>
            <person name="Klebe G."/>
        </authorList>
    </citation>
    <scope>X-RAY CRYSTALLOGRAPHY (1.43 ANGSTROMS) IN COMPLEX WITH NADP AND SYNTHETIC INHIBITOR</scope>
</reference>
<sequence>MASRLLLNNGAKMPILGLGTWKSPPGQVTEAVKVAIDVGYRHIDCAHVYQNENEVGVAIQEKLREQVVKREELFIVSKLWCTYHEKGLVKGACQKTLSDLKLDYLDLYLIHWPTGFKPGKEFFPLDESGNVVPSDTNILDTWAAMEELVDEGLVKAIGISNFNHLQVEMILNKPGLKYKPAVNQIECHPYLTQEKLIQYCQSKGIVVTAYSPLGSPDRPWAKPEDPSLLEDPRIKAIAAKHNKTTAQVLIRFPMQRNLVVIPKSVTPERIAENFKVFDFELSSQDMTTLLSYNRNWRVCALLSCTSHKDYPFHEEF</sequence>
<protein>
    <recommendedName>
        <fullName>Aldo-keto reductase family 1 member B1</fullName>
        <ecNumber evidence="16">1.1.1.21</ecNumber>
        <ecNumber evidence="4">1.1.1.300</ecNumber>
        <ecNumber evidence="3 4 16">1.1.1.372</ecNumber>
        <ecNumber evidence="3 15">1.1.1.54</ecNumber>
    </recommendedName>
    <alternativeName>
        <fullName>Aldehyde reductase</fullName>
    </alternativeName>
    <alternativeName>
        <fullName>Aldose reductase</fullName>
        <shortName>AR</shortName>
    </alternativeName>
</protein>
<name>ALDR_HUMAN</name>